<dbReference type="EC" id="2.7.11.1" evidence="35 37 42 44 45"/>
<dbReference type="EMBL" id="X65687">
    <property type="protein sequence ID" value="CAA46620.1"/>
    <property type="molecule type" value="mRNA"/>
</dbReference>
<dbReference type="EMBL" id="AF534134">
    <property type="protein sequence ID" value="AAN04036.1"/>
    <property type="molecule type" value="Genomic_DNA"/>
</dbReference>
<dbReference type="EMBL" id="M94335">
    <property type="protein sequence ID" value="AAA18254.1"/>
    <property type="molecule type" value="mRNA"/>
</dbReference>
<dbReference type="EMBL" id="AK154936">
    <property type="protein sequence ID" value="BAE32937.1"/>
    <property type="molecule type" value="mRNA"/>
</dbReference>
<dbReference type="EMBL" id="CH466549">
    <property type="protein sequence ID" value="EDL18586.1"/>
    <property type="molecule type" value="Genomic_DNA"/>
</dbReference>
<dbReference type="EMBL" id="BC066018">
    <property type="protein sequence ID" value="AAH66018.1"/>
    <property type="molecule type" value="mRNA"/>
</dbReference>
<dbReference type="CCDS" id="CCDS26194.1"/>
<dbReference type="PIR" id="S33364">
    <property type="entry name" value="S33364"/>
</dbReference>
<dbReference type="RefSeq" id="NP_001159366.1">
    <property type="nucleotide sequence ID" value="NM_001165894.1"/>
</dbReference>
<dbReference type="RefSeq" id="NP_001318036.1">
    <property type="nucleotide sequence ID" value="NM_001331107.2"/>
</dbReference>
<dbReference type="RefSeq" id="NP_001396378.1">
    <property type="nucleotide sequence ID" value="NM_001409449.1"/>
</dbReference>
<dbReference type="RefSeq" id="NP_033782.1">
    <property type="nucleotide sequence ID" value="NM_009652.4"/>
</dbReference>
<dbReference type="RefSeq" id="XP_006515478.1">
    <property type="nucleotide sequence ID" value="XM_006515415.1"/>
</dbReference>
<dbReference type="SMR" id="P31750"/>
<dbReference type="BioGRID" id="198056">
    <property type="interactions" value="72"/>
</dbReference>
<dbReference type="CORUM" id="P31750"/>
<dbReference type="DIP" id="DIP-736N"/>
<dbReference type="ELM" id="P31750"/>
<dbReference type="FunCoup" id="P31750">
    <property type="interactions" value="2982"/>
</dbReference>
<dbReference type="IntAct" id="P31750">
    <property type="interactions" value="27"/>
</dbReference>
<dbReference type="MINT" id="P31750"/>
<dbReference type="STRING" id="10090.ENSMUSP00000001780"/>
<dbReference type="BindingDB" id="P31750"/>
<dbReference type="ChEMBL" id="CHEMBL5859"/>
<dbReference type="GlyCosmos" id="P31750">
    <property type="glycosylation" value="5 sites, No reported glycans"/>
</dbReference>
<dbReference type="GlyGen" id="P31750">
    <property type="glycosylation" value="10 sites, 1 O-linked glycan (3 sites)"/>
</dbReference>
<dbReference type="iPTMnet" id="P31750"/>
<dbReference type="PhosphoSitePlus" id="P31750"/>
<dbReference type="SwissPalm" id="P31750"/>
<dbReference type="jPOST" id="P31750"/>
<dbReference type="PaxDb" id="10090-ENSMUSP00000001780"/>
<dbReference type="PeptideAtlas" id="P31750"/>
<dbReference type="ProteomicsDB" id="282066"/>
<dbReference type="Pumba" id="P31750"/>
<dbReference type="ABCD" id="P31750">
    <property type="antibodies" value="2 sequenced antibodies"/>
</dbReference>
<dbReference type="Antibodypedia" id="135">
    <property type="antibodies" value="5275 antibodies from 57 providers"/>
</dbReference>
<dbReference type="DNASU" id="11651"/>
<dbReference type="Ensembl" id="ENSMUST00000001780.10">
    <property type="protein sequence ID" value="ENSMUSP00000001780.4"/>
    <property type="gene ID" value="ENSMUSG00000001729.15"/>
</dbReference>
<dbReference type="GeneID" id="11651"/>
<dbReference type="KEGG" id="mmu:11651"/>
<dbReference type="UCSC" id="uc007pex.2">
    <property type="organism name" value="mouse"/>
</dbReference>
<dbReference type="AGR" id="MGI:87986"/>
<dbReference type="CTD" id="207"/>
<dbReference type="MGI" id="MGI:87986">
    <property type="gene designation" value="Akt1"/>
</dbReference>
<dbReference type="VEuPathDB" id="HostDB:ENSMUSG00000001729"/>
<dbReference type="eggNOG" id="KOG0690">
    <property type="taxonomic scope" value="Eukaryota"/>
</dbReference>
<dbReference type="GeneTree" id="ENSGT00940000158752"/>
<dbReference type="HOGENOM" id="CLU_000288_11_0_1"/>
<dbReference type="InParanoid" id="P31750"/>
<dbReference type="OMA" id="CIDNERR"/>
<dbReference type="OrthoDB" id="63267at2759"/>
<dbReference type="PhylomeDB" id="P31750"/>
<dbReference type="TreeFam" id="TF102004"/>
<dbReference type="BRENDA" id="2.7.11.1">
    <property type="organism ID" value="3474"/>
</dbReference>
<dbReference type="Reactome" id="R-MMU-1257604">
    <property type="pathway name" value="PIP3 activates AKT signaling"/>
</dbReference>
<dbReference type="Reactome" id="R-MMU-1358803">
    <property type="pathway name" value="Downregulation of ERBB2:ERBB3 signaling"/>
</dbReference>
<dbReference type="Reactome" id="R-MMU-1474151">
    <property type="pathway name" value="Tetrahydrobiopterin (BH4) synthesis, recycling, salvage and regulation"/>
</dbReference>
<dbReference type="Reactome" id="R-MMU-165159">
    <property type="pathway name" value="MTOR signalling"/>
</dbReference>
<dbReference type="Reactome" id="R-MMU-198323">
    <property type="pathway name" value="AKT phosphorylates targets in the cytosol"/>
</dbReference>
<dbReference type="Reactome" id="R-MMU-198693">
    <property type="pathway name" value="AKT phosphorylates targets in the nucleus"/>
</dbReference>
<dbReference type="Reactome" id="R-MMU-199418">
    <property type="pathway name" value="Negative regulation of the PI3K/AKT network"/>
</dbReference>
<dbReference type="Reactome" id="R-MMU-203615">
    <property type="pathway name" value="eNOS activation"/>
</dbReference>
<dbReference type="Reactome" id="R-MMU-211163">
    <property type="pathway name" value="AKT-mediated inactivation of FOXO1A"/>
</dbReference>
<dbReference type="Reactome" id="R-MMU-354192">
    <property type="pathway name" value="Integrin signaling"/>
</dbReference>
<dbReference type="Reactome" id="R-MMU-3769402">
    <property type="pathway name" value="Deactivation of the beta-catenin transactivating complex"/>
</dbReference>
<dbReference type="Reactome" id="R-MMU-389357">
    <property type="pathway name" value="CD28 dependent PI3K/Akt signaling"/>
</dbReference>
<dbReference type="Reactome" id="R-MMU-389513">
    <property type="pathway name" value="Co-inhibition by CTLA4"/>
</dbReference>
<dbReference type="Reactome" id="R-MMU-392451">
    <property type="pathway name" value="G beta:gamma signalling through PI3Kgamma"/>
</dbReference>
<dbReference type="Reactome" id="R-MMU-450385">
    <property type="pathway name" value="Butyrate Response Factor 1 (BRF1) binds and destabilizes mRNA"/>
</dbReference>
<dbReference type="Reactome" id="R-MMU-450604">
    <property type="pathway name" value="KSRP (KHSRP) binds and destabilizes mRNA"/>
</dbReference>
<dbReference type="Reactome" id="R-MMU-5218920">
    <property type="pathway name" value="VEGFR2 mediated vascular permeability"/>
</dbReference>
<dbReference type="Reactome" id="R-MMU-5628897">
    <property type="pathway name" value="TP53 Regulates Metabolic Genes"/>
</dbReference>
<dbReference type="Reactome" id="R-MMU-6804757">
    <property type="pathway name" value="Regulation of TP53 Degradation"/>
</dbReference>
<dbReference type="Reactome" id="R-MMU-6804758">
    <property type="pathway name" value="Regulation of TP53 Activity through Acetylation"/>
</dbReference>
<dbReference type="Reactome" id="R-MMU-6804759">
    <property type="pathway name" value="Regulation of TP53 Activity through Association with Co-factors"/>
</dbReference>
<dbReference type="Reactome" id="R-MMU-6811558">
    <property type="pathway name" value="PI5P, PP2A and IER3 Regulate PI3K/AKT Signaling"/>
</dbReference>
<dbReference type="Reactome" id="R-MMU-69202">
    <property type="pathway name" value="Cyclin E associated events during G1/S transition"/>
</dbReference>
<dbReference type="Reactome" id="R-MMU-69656">
    <property type="pathway name" value="Cyclin A:Cdk2-associated events at S phase entry"/>
</dbReference>
<dbReference type="Reactome" id="R-MMU-8849469">
    <property type="pathway name" value="PTK6 Regulates RTKs and Their Effectors AKT1 and DOK1"/>
</dbReference>
<dbReference type="Reactome" id="R-MMU-8876198">
    <property type="pathway name" value="RAB GEFs exchange GTP for GDP on RABs"/>
</dbReference>
<dbReference type="Reactome" id="R-MMU-8948751">
    <property type="pathway name" value="Regulation of PTEN stability and activity"/>
</dbReference>
<dbReference type="Reactome" id="R-MMU-9009391">
    <property type="pathway name" value="Extra-nuclear estrogen signaling"/>
</dbReference>
<dbReference type="Reactome" id="R-MMU-9604323">
    <property type="pathway name" value="Negative regulation of NOTCH4 signaling"/>
</dbReference>
<dbReference type="Reactome" id="R-MMU-9607240">
    <property type="pathway name" value="FLT3 Signaling"/>
</dbReference>
<dbReference type="Reactome" id="R-MMU-9614399">
    <property type="pathway name" value="Regulation of localization of FOXO transcription factors"/>
</dbReference>
<dbReference type="Reactome" id="R-MMU-9634638">
    <property type="pathway name" value="Estrogen-dependent nuclear events downstream of ESR-membrane signaling"/>
</dbReference>
<dbReference type="Reactome" id="R-MMU-9755511">
    <property type="pathway name" value="KEAP1-NFE2L2 pathway"/>
</dbReference>
<dbReference type="Reactome" id="R-MMU-9841251">
    <property type="pathway name" value="Mitochondrial unfolded protein response (UPRmt)"/>
</dbReference>
<dbReference type="Reactome" id="R-MMU-9856530">
    <property type="pathway name" value="High laminar flow shear stress activates signaling by PIEZO1 and PECAM1:CDH5:KDR in endothelial cells"/>
</dbReference>
<dbReference type="BioGRID-ORCS" id="11651">
    <property type="hits" value="7 hits in 81 CRISPR screens"/>
</dbReference>
<dbReference type="CD-CODE" id="01CA17F3">
    <property type="entry name" value="Centrosome"/>
</dbReference>
<dbReference type="CD-CODE" id="D12E4DB9">
    <property type="entry name" value="Stress granule"/>
</dbReference>
<dbReference type="ChiTaRS" id="Akt1">
    <property type="organism name" value="mouse"/>
</dbReference>
<dbReference type="PRO" id="PR:P31750"/>
<dbReference type="Proteomes" id="UP000000589">
    <property type="component" value="Chromosome 12"/>
</dbReference>
<dbReference type="RNAct" id="P31750">
    <property type="molecule type" value="protein"/>
</dbReference>
<dbReference type="Bgee" id="ENSMUSG00000001729">
    <property type="expression patterns" value="Expressed in ectoplacental cone and 272 other cell types or tissues"/>
</dbReference>
<dbReference type="ExpressionAtlas" id="P31750">
    <property type="expression patterns" value="baseline and differential"/>
</dbReference>
<dbReference type="GO" id="GO:0005911">
    <property type="term" value="C:cell-cell junction"/>
    <property type="evidence" value="ECO:0000314"/>
    <property type="project" value="MGI"/>
</dbReference>
<dbReference type="GO" id="GO:0036064">
    <property type="term" value="C:ciliary basal body"/>
    <property type="evidence" value="ECO:0000314"/>
    <property type="project" value="MGI"/>
</dbReference>
<dbReference type="GO" id="GO:0005737">
    <property type="term" value="C:cytoplasm"/>
    <property type="evidence" value="ECO:0000314"/>
    <property type="project" value="UniProtKB"/>
</dbReference>
<dbReference type="GO" id="GO:0005829">
    <property type="term" value="C:cytosol"/>
    <property type="evidence" value="ECO:0000314"/>
    <property type="project" value="MGI"/>
</dbReference>
<dbReference type="GO" id="GO:0098978">
    <property type="term" value="C:glutamatergic synapse"/>
    <property type="evidence" value="ECO:0000314"/>
    <property type="project" value="SynGO"/>
</dbReference>
<dbReference type="GO" id="GO:0005758">
    <property type="term" value="C:mitochondrial intermembrane space"/>
    <property type="evidence" value="ECO:0000314"/>
    <property type="project" value="UniProtKB"/>
</dbReference>
<dbReference type="GO" id="GO:0005739">
    <property type="term" value="C:mitochondrion"/>
    <property type="evidence" value="ECO:0000314"/>
    <property type="project" value="MGI"/>
</dbReference>
<dbReference type="GO" id="GO:0005654">
    <property type="term" value="C:nucleoplasm"/>
    <property type="evidence" value="ECO:0007669"/>
    <property type="project" value="Ensembl"/>
</dbReference>
<dbReference type="GO" id="GO:0005634">
    <property type="term" value="C:nucleus"/>
    <property type="evidence" value="ECO:0000314"/>
    <property type="project" value="UniProtKB"/>
</dbReference>
<dbReference type="GO" id="GO:0005886">
    <property type="term" value="C:plasma membrane"/>
    <property type="evidence" value="ECO:0000314"/>
    <property type="project" value="UniProtKB"/>
</dbReference>
<dbReference type="GO" id="GO:0032991">
    <property type="term" value="C:protein-containing complex"/>
    <property type="evidence" value="ECO:0000266"/>
    <property type="project" value="MGI"/>
</dbReference>
<dbReference type="GO" id="GO:0005819">
    <property type="term" value="C:spindle"/>
    <property type="evidence" value="ECO:0000314"/>
    <property type="project" value="MGI"/>
</dbReference>
<dbReference type="GO" id="GO:0031982">
    <property type="term" value="C:vesicle"/>
    <property type="evidence" value="ECO:0007669"/>
    <property type="project" value="Ensembl"/>
</dbReference>
<dbReference type="GO" id="GO:0071889">
    <property type="term" value="F:14-3-3 protein binding"/>
    <property type="evidence" value="ECO:0007669"/>
    <property type="project" value="Ensembl"/>
</dbReference>
<dbReference type="GO" id="GO:0005524">
    <property type="term" value="F:ATP binding"/>
    <property type="evidence" value="ECO:0007669"/>
    <property type="project" value="UniProtKB-KW"/>
</dbReference>
<dbReference type="GO" id="GO:0005516">
    <property type="term" value="F:calmodulin binding"/>
    <property type="evidence" value="ECO:0000250"/>
    <property type="project" value="UniProtKB"/>
</dbReference>
<dbReference type="GO" id="GO:0016301">
    <property type="term" value="F:kinase activity"/>
    <property type="evidence" value="ECO:0000314"/>
    <property type="project" value="MGI"/>
</dbReference>
<dbReference type="GO" id="GO:0030235">
    <property type="term" value="F:nitric-oxide synthase regulator activity"/>
    <property type="evidence" value="ECO:0007669"/>
    <property type="project" value="Ensembl"/>
</dbReference>
<dbReference type="GO" id="GO:0005547">
    <property type="term" value="F:phosphatidylinositol-3,4,5-trisphosphate binding"/>
    <property type="evidence" value="ECO:0007669"/>
    <property type="project" value="Ensembl"/>
</dbReference>
<dbReference type="GO" id="GO:0043325">
    <property type="term" value="F:phosphatidylinositol-3,4-bisphosphate binding"/>
    <property type="evidence" value="ECO:0007669"/>
    <property type="project" value="Ensembl"/>
</dbReference>
<dbReference type="GO" id="GO:0099104">
    <property type="term" value="F:potassium channel activator activity"/>
    <property type="evidence" value="ECO:0000250"/>
    <property type="project" value="UniProtKB"/>
</dbReference>
<dbReference type="GO" id="GO:0042803">
    <property type="term" value="F:protein homodimerization activity"/>
    <property type="evidence" value="ECO:0007669"/>
    <property type="project" value="Ensembl"/>
</dbReference>
<dbReference type="GO" id="GO:0004672">
    <property type="term" value="F:protein kinase activity"/>
    <property type="evidence" value="ECO:0000314"/>
    <property type="project" value="UniProtKB"/>
</dbReference>
<dbReference type="GO" id="GO:0019901">
    <property type="term" value="F:protein kinase binding"/>
    <property type="evidence" value="ECO:0000353"/>
    <property type="project" value="UniProtKB"/>
</dbReference>
<dbReference type="GO" id="GO:0106310">
    <property type="term" value="F:protein serine kinase activity"/>
    <property type="evidence" value="ECO:0000314"/>
    <property type="project" value="MGI"/>
</dbReference>
<dbReference type="GO" id="GO:0004674">
    <property type="term" value="F:protein serine/threonine kinase activity"/>
    <property type="evidence" value="ECO:0000314"/>
    <property type="project" value="UniProtKB"/>
</dbReference>
<dbReference type="GO" id="GO:0004712">
    <property type="term" value="F:protein serine/threonine/tyrosine kinase activity"/>
    <property type="evidence" value="ECO:0000266"/>
    <property type="project" value="MGI"/>
</dbReference>
<dbReference type="GO" id="GO:1904841">
    <property type="term" value="F:TORC2 complex binding"/>
    <property type="evidence" value="ECO:0007669"/>
    <property type="project" value="Ensembl"/>
</dbReference>
<dbReference type="GO" id="GO:0006924">
    <property type="term" value="P:activation-induced cell death of T cells"/>
    <property type="evidence" value="ECO:0000266"/>
    <property type="project" value="MGI"/>
</dbReference>
<dbReference type="GO" id="GO:0008637">
    <property type="term" value="P:apoptotic mitochondrial changes"/>
    <property type="evidence" value="ECO:0000314"/>
    <property type="project" value="MGI"/>
</dbReference>
<dbReference type="GO" id="GO:0048266">
    <property type="term" value="P:behavioral response to pain"/>
    <property type="evidence" value="ECO:0000316"/>
    <property type="project" value="MGI"/>
</dbReference>
<dbReference type="GO" id="GO:0002042">
    <property type="term" value="P:cell migration involved in sprouting angiogenesis"/>
    <property type="evidence" value="ECO:0007669"/>
    <property type="project" value="Ensembl"/>
</dbReference>
<dbReference type="GO" id="GO:0030030">
    <property type="term" value="P:cell projection organization"/>
    <property type="evidence" value="ECO:0000266"/>
    <property type="project" value="MGI"/>
</dbReference>
<dbReference type="GO" id="GO:0036294">
    <property type="term" value="P:cellular response to decreased oxygen levels"/>
    <property type="evidence" value="ECO:0000314"/>
    <property type="project" value="MGI"/>
</dbReference>
<dbReference type="GO" id="GO:0071364">
    <property type="term" value="P:cellular response to epidermal growth factor stimulus"/>
    <property type="evidence" value="ECO:0000314"/>
    <property type="project" value="UniProtKB"/>
</dbReference>
<dbReference type="GO" id="GO:0097011">
    <property type="term" value="P:cellular response to granulocyte macrophage colony-stimulating factor stimulus"/>
    <property type="evidence" value="ECO:0000314"/>
    <property type="project" value="MGI"/>
</dbReference>
<dbReference type="GO" id="GO:0071363">
    <property type="term" value="P:cellular response to growth factor stimulus"/>
    <property type="evidence" value="ECO:0000314"/>
    <property type="project" value="MGI"/>
</dbReference>
<dbReference type="GO" id="GO:0032869">
    <property type="term" value="P:cellular response to insulin stimulus"/>
    <property type="evidence" value="ECO:0000314"/>
    <property type="project" value="UniProtKB"/>
</dbReference>
<dbReference type="GO" id="GO:1990090">
    <property type="term" value="P:cellular response to nerve growth factor stimulus"/>
    <property type="evidence" value="ECO:0007669"/>
    <property type="project" value="Ensembl"/>
</dbReference>
<dbReference type="GO" id="GO:0140052">
    <property type="term" value="P:cellular response to oxidised low-density lipoprotein particle stimulus"/>
    <property type="evidence" value="ECO:0007669"/>
    <property type="project" value="Ensembl"/>
</dbReference>
<dbReference type="GO" id="GO:1901653">
    <property type="term" value="P:cellular response to peptide"/>
    <property type="evidence" value="ECO:0000314"/>
    <property type="project" value="MGI"/>
</dbReference>
<dbReference type="GO" id="GO:0071380">
    <property type="term" value="P:cellular response to prostaglandin E stimulus"/>
    <property type="evidence" value="ECO:0000314"/>
    <property type="project" value="MGI"/>
</dbReference>
<dbReference type="GO" id="GO:0071356">
    <property type="term" value="P:cellular response to tumor necrosis factor"/>
    <property type="evidence" value="ECO:0000314"/>
    <property type="project" value="MGI"/>
</dbReference>
<dbReference type="GO" id="GO:0035924">
    <property type="term" value="P:cellular response to vascular endothelial growth factor stimulus"/>
    <property type="evidence" value="ECO:0000314"/>
    <property type="project" value="MGI"/>
</dbReference>
<dbReference type="GO" id="GO:0007010">
    <property type="term" value="P:cytoskeleton organization"/>
    <property type="evidence" value="ECO:0000304"/>
    <property type="project" value="UniProtKB"/>
</dbReference>
<dbReference type="GO" id="GO:0007173">
    <property type="term" value="P:epidermal growth factor receptor signaling pathway"/>
    <property type="evidence" value="ECO:0007669"/>
    <property type="project" value="Ensembl"/>
</dbReference>
<dbReference type="GO" id="GO:0072655">
    <property type="term" value="P:establishment of protein localization to mitochondrion"/>
    <property type="evidence" value="ECO:0007669"/>
    <property type="project" value="Ensembl"/>
</dbReference>
<dbReference type="GO" id="GO:0097194">
    <property type="term" value="P:execution phase of apoptosis"/>
    <property type="evidence" value="ECO:0000314"/>
    <property type="project" value="MGI"/>
</dbReference>
<dbReference type="GO" id="GO:0010467">
    <property type="term" value="P:gene expression"/>
    <property type="evidence" value="ECO:0000315"/>
    <property type="project" value="MGI"/>
</dbReference>
<dbReference type="GO" id="GO:0007281">
    <property type="term" value="P:germ cell development"/>
    <property type="evidence" value="ECO:0000314"/>
    <property type="project" value="MGI"/>
</dbReference>
<dbReference type="GO" id="GO:0042593">
    <property type="term" value="P:glucose homeostasis"/>
    <property type="evidence" value="ECO:0000315"/>
    <property type="project" value="MGI"/>
</dbReference>
<dbReference type="GO" id="GO:0006006">
    <property type="term" value="P:glucose metabolic process"/>
    <property type="evidence" value="ECO:0000315"/>
    <property type="project" value="MGI"/>
</dbReference>
<dbReference type="GO" id="GO:0005978">
    <property type="term" value="P:glycogen biosynthetic process"/>
    <property type="evidence" value="ECO:0007669"/>
    <property type="project" value="UniProtKB-KW"/>
</dbReference>
<dbReference type="GO" id="GO:0060709">
    <property type="term" value="P:glycogen cell differentiation involved in embryonic placenta development"/>
    <property type="evidence" value="ECO:0000315"/>
    <property type="project" value="MGI"/>
</dbReference>
<dbReference type="GO" id="GO:0005977">
    <property type="term" value="P:glycogen metabolic process"/>
    <property type="evidence" value="ECO:0000315"/>
    <property type="project" value="MGI"/>
</dbReference>
<dbReference type="GO" id="GO:0006954">
    <property type="term" value="P:inflammatory response"/>
    <property type="evidence" value="ECO:0000314"/>
    <property type="project" value="MGI"/>
</dbReference>
<dbReference type="GO" id="GO:0008286">
    <property type="term" value="P:insulin receptor signaling pathway"/>
    <property type="evidence" value="ECO:0000314"/>
    <property type="project" value="MGI"/>
</dbReference>
<dbReference type="GO" id="GO:0048009">
    <property type="term" value="P:insulin-like growth factor receptor signaling pathway"/>
    <property type="evidence" value="ECO:0000314"/>
    <property type="project" value="MGI"/>
</dbReference>
<dbReference type="GO" id="GO:0035655">
    <property type="term" value="P:interleukin-18-mediated signaling pathway"/>
    <property type="evidence" value="ECO:0007669"/>
    <property type="project" value="Ensembl"/>
</dbReference>
<dbReference type="GO" id="GO:0035556">
    <property type="term" value="P:intracellular signal transduction"/>
    <property type="evidence" value="ECO:0000266"/>
    <property type="project" value="MGI"/>
</dbReference>
<dbReference type="GO" id="GO:0060716">
    <property type="term" value="P:labyrinthine layer blood vessel development"/>
    <property type="evidence" value="ECO:0000315"/>
    <property type="project" value="MGI"/>
</dbReference>
<dbReference type="GO" id="GO:0031663">
    <property type="term" value="P:lipopolysaccharide-mediated signaling pathway"/>
    <property type="evidence" value="ECO:0000314"/>
    <property type="project" value="MGI"/>
</dbReference>
<dbReference type="GO" id="GO:0072656">
    <property type="term" value="P:maintenance of protein location in mitochondrion"/>
    <property type="evidence" value="ECO:0007669"/>
    <property type="project" value="Ensembl"/>
</dbReference>
<dbReference type="GO" id="GO:0022605">
    <property type="term" value="P:mammalian oogenesis stage"/>
    <property type="evidence" value="ECO:0000315"/>
    <property type="project" value="MGI"/>
</dbReference>
<dbReference type="GO" id="GO:0001893">
    <property type="term" value="P:maternal placenta development"/>
    <property type="evidence" value="ECO:0000315"/>
    <property type="project" value="MGI"/>
</dbReference>
<dbReference type="GO" id="GO:0043066">
    <property type="term" value="P:negative regulation of apoptotic process"/>
    <property type="evidence" value="ECO:0000315"/>
    <property type="project" value="UniProtKB"/>
</dbReference>
<dbReference type="GO" id="GO:0010507">
    <property type="term" value="P:negative regulation of autophagy"/>
    <property type="evidence" value="ECO:0007669"/>
    <property type="project" value="Ensembl"/>
</dbReference>
<dbReference type="GO" id="GO:0045792">
    <property type="term" value="P:negative regulation of cell size"/>
    <property type="evidence" value="ECO:0000266"/>
    <property type="project" value="MGI"/>
</dbReference>
<dbReference type="GO" id="GO:0160049">
    <property type="term" value="P:negative regulation of cGAS/STING signaling pathway"/>
    <property type="evidence" value="ECO:0007669"/>
    <property type="project" value="Ensembl"/>
</dbReference>
<dbReference type="GO" id="GO:1902018">
    <property type="term" value="P:negative regulation of cilium assembly"/>
    <property type="evidence" value="ECO:0000250"/>
    <property type="project" value="UniProtKB"/>
</dbReference>
<dbReference type="GO" id="GO:0031999">
    <property type="term" value="P:negative regulation of fatty acid beta-oxidation"/>
    <property type="evidence" value="ECO:0007669"/>
    <property type="project" value="Ensembl"/>
</dbReference>
<dbReference type="GO" id="GO:0010629">
    <property type="term" value="P:negative regulation of gene expression"/>
    <property type="evidence" value="ECO:0000314"/>
    <property type="project" value="BHF-UCL"/>
</dbReference>
<dbReference type="GO" id="GO:1903384">
    <property type="term" value="P:negative regulation of hydrogen peroxide-induced neuron intrinsic apoptotic signaling pathway"/>
    <property type="evidence" value="ECO:0007669"/>
    <property type="project" value="Ensembl"/>
</dbReference>
<dbReference type="GO" id="GO:2001243">
    <property type="term" value="P:negative regulation of intrinsic apoptotic signaling pathway"/>
    <property type="evidence" value="ECO:0000315"/>
    <property type="project" value="MGI"/>
</dbReference>
<dbReference type="GO" id="GO:1903038">
    <property type="term" value="P:negative regulation of leukocyte cell-cell adhesion"/>
    <property type="evidence" value="ECO:0007669"/>
    <property type="project" value="Ensembl"/>
</dbReference>
<dbReference type="GO" id="GO:0010748">
    <property type="term" value="P:negative regulation of long-chain fatty acid import across plasma membrane"/>
    <property type="evidence" value="ECO:0007669"/>
    <property type="project" value="Ensembl"/>
</dbReference>
<dbReference type="GO" id="GO:2000402">
    <property type="term" value="P:negative regulation of lymphocyte migration"/>
    <property type="evidence" value="ECO:0007669"/>
    <property type="project" value="Ensembl"/>
</dbReference>
<dbReference type="GO" id="GO:1903898">
    <property type="term" value="P:negative regulation of PERK-mediated unfolded protein response"/>
    <property type="evidence" value="ECO:0000314"/>
    <property type="project" value="UniProtKB"/>
</dbReference>
<dbReference type="GO" id="GO:0150033">
    <property type="term" value="P:negative regulation of protein localization to lysosome"/>
    <property type="evidence" value="ECO:0000250"/>
    <property type="project" value="UniProtKB"/>
</dbReference>
<dbReference type="GO" id="GO:0031397">
    <property type="term" value="P:negative regulation of protein ubiquitination"/>
    <property type="evidence" value="ECO:0007669"/>
    <property type="project" value="Ensembl"/>
</dbReference>
<dbReference type="GO" id="GO:0045861">
    <property type="term" value="P:negative regulation of proteolysis"/>
    <property type="evidence" value="ECO:0007669"/>
    <property type="project" value="Ensembl"/>
</dbReference>
<dbReference type="GO" id="GO:0090201">
    <property type="term" value="P:negative regulation of release of cytochrome c from mitochondria"/>
    <property type="evidence" value="ECO:0000314"/>
    <property type="project" value="UniProtKB"/>
</dbReference>
<dbReference type="GO" id="GO:0001649">
    <property type="term" value="P:osteoblast differentiation"/>
    <property type="evidence" value="ECO:0000316"/>
    <property type="project" value="MGI"/>
</dbReference>
<dbReference type="GO" id="GO:0032287">
    <property type="term" value="P:peripheral nervous system myelin maintenance"/>
    <property type="evidence" value="ECO:0000315"/>
    <property type="project" value="MGI"/>
</dbReference>
<dbReference type="GO" id="GO:0043491">
    <property type="term" value="P:phosphatidylinositol 3-kinase/protein kinase B signal transduction"/>
    <property type="evidence" value="ECO:0000316"/>
    <property type="project" value="MGI"/>
</dbReference>
<dbReference type="GO" id="GO:0043536">
    <property type="term" value="P:positive regulation of blood vessel endothelial cell migration"/>
    <property type="evidence" value="ECO:0007669"/>
    <property type="project" value="Ensembl"/>
</dbReference>
<dbReference type="GO" id="GO:0030307">
    <property type="term" value="P:positive regulation of cell growth"/>
    <property type="evidence" value="ECO:0007669"/>
    <property type="project" value="Ensembl"/>
</dbReference>
<dbReference type="GO" id="GO:0046326">
    <property type="term" value="P:positive regulation of D-glucose import"/>
    <property type="evidence" value="ECO:0007669"/>
    <property type="project" value="Ensembl"/>
</dbReference>
<dbReference type="GO" id="GO:0001938">
    <property type="term" value="P:positive regulation of endothelial cell proliferation"/>
    <property type="evidence" value="ECO:0000250"/>
    <property type="project" value="UniProtKB"/>
</dbReference>
<dbReference type="GO" id="GO:0045600">
    <property type="term" value="P:positive regulation of fat cell differentiation"/>
    <property type="evidence" value="ECO:0007669"/>
    <property type="project" value="Ensembl"/>
</dbReference>
<dbReference type="GO" id="GO:0010763">
    <property type="term" value="P:positive regulation of fibroblast migration"/>
    <property type="evidence" value="ECO:0000315"/>
    <property type="project" value="MGI"/>
</dbReference>
<dbReference type="GO" id="GO:1900087">
    <property type="term" value="P:positive regulation of G1/S transition of mitotic cell cycle"/>
    <property type="evidence" value="ECO:0007669"/>
    <property type="project" value="Ensembl"/>
</dbReference>
<dbReference type="GO" id="GO:0010628">
    <property type="term" value="P:positive regulation of gene expression"/>
    <property type="evidence" value="ECO:0000315"/>
    <property type="project" value="ARUK-UCL"/>
</dbReference>
<dbReference type="GO" id="GO:0045725">
    <property type="term" value="P:positive regulation of glycogen biosynthetic process"/>
    <property type="evidence" value="ECO:0007669"/>
    <property type="project" value="Ensembl"/>
</dbReference>
<dbReference type="GO" id="GO:0046889">
    <property type="term" value="P:positive regulation of lipid biosynthetic process"/>
    <property type="evidence" value="ECO:0000250"/>
    <property type="project" value="UniProtKB"/>
</dbReference>
<dbReference type="GO" id="GO:0045429">
    <property type="term" value="P:positive regulation of nitric oxide biosynthetic process"/>
    <property type="evidence" value="ECO:0007669"/>
    <property type="project" value="Ensembl"/>
</dbReference>
<dbReference type="GO" id="GO:0046622">
    <property type="term" value="P:positive regulation of organ growth"/>
    <property type="evidence" value="ECO:0000315"/>
    <property type="project" value="MGI"/>
</dbReference>
<dbReference type="GO" id="GO:0032436">
    <property type="term" value="P:positive regulation of proteasomal ubiquitin-dependent protein catabolic process"/>
    <property type="evidence" value="ECO:0000315"/>
    <property type="project" value="MGI"/>
</dbReference>
<dbReference type="GO" id="GO:2000010">
    <property type="term" value="P:positive regulation of protein localization to cell surface"/>
    <property type="evidence" value="ECO:0000315"/>
    <property type="project" value="UniProtKB"/>
</dbReference>
<dbReference type="GO" id="GO:1905552">
    <property type="term" value="P:positive regulation of protein localization to endoplasmic reticulum"/>
    <property type="evidence" value="ECO:0007669"/>
    <property type="project" value="Ensembl"/>
</dbReference>
<dbReference type="GO" id="GO:1900182">
    <property type="term" value="P:positive regulation of protein localization to nucleus"/>
    <property type="evidence" value="ECO:0007669"/>
    <property type="project" value="Ensembl"/>
</dbReference>
<dbReference type="GO" id="GO:1903078">
    <property type="term" value="P:positive regulation of protein localization to plasma membrane"/>
    <property type="evidence" value="ECO:0007669"/>
    <property type="project" value="Ensembl"/>
</dbReference>
<dbReference type="GO" id="GO:0048661">
    <property type="term" value="P:positive regulation of smooth muscle cell proliferation"/>
    <property type="evidence" value="ECO:0007669"/>
    <property type="project" value="Ensembl"/>
</dbReference>
<dbReference type="GO" id="GO:0010765">
    <property type="term" value="P:positive regulation of sodium ion transport"/>
    <property type="evidence" value="ECO:0000314"/>
    <property type="project" value="MGI"/>
</dbReference>
<dbReference type="GO" id="GO:1904263">
    <property type="term" value="P:positive regulation of TORC1 signaling"/>
    <property type="evidence" value="ECO:0000250"/>
    <property type="project" value="UniProtKB"/>
</dbReference>
<dbReference type="GO" id="GO:1904515">
    <property type="term" value="P:positive regulation of TORC2 signaling"/>
    <property type="evidence" value="ECO:0000315"/>
    <property type="project" value="UniProtKB"/>
</dbReference>
<dbReference type="GO" id="GO:0045944">
    <property type="term" value="P:positive regulation of transcription by RNA polymerase II"/>
    <property type="evidence" value="ECO:0000316"/>
    <property type="project" value="MGI"/>
</dbReference>
<dbReference type="GO" id="GO:0043161">
    <property type="term" value="P:proteasome-mediated ubiquitin-dependent protein catabolic process"/>
    <property type="evidence" value="ECO:0000315"/>
    <property type="project" value="MGI"/>
</dbReference>
<dbReference type="GO" id="GO:0030163">
    <property type="term" value="P:protein catabolic process"/>
    <property type="evidence" value="ECO:0000314"/>
    <property type="project" value="MGI"/>
</dbReference>
<dbReference type="GO" id="GO:0006606">
    <property type="term" value="P:protein import into nucleus"/>
    <property type="evidence" value="ECO:0007669"/>
    <property type="project" value="Ensembl"/>
</dbReference>
<dbReference type="GO" id="GO:0006468">
    <property type="term" value="P:protein phosphorylation"/>
    <property type="evidence" value="ECO:0000314"/>
    <property type="project" value="UniProtKB"/>
</dbReference>
<dbReference type="GO" id="GO:0016567">
    <property type="term" value="P:protein ubiquitination"/>
    <property type="evidence" value="ECO:0000314"/>
    <property type="project" value="MGI"/>
</dbReference>
<dbReference type="GO" id="GO:0042981">
    <property type="term" value="P:regulation of apoptotic process"/>
    <property type="evidence" value="ECO:0000314"/>
    <property type="project" value="UniProtKB"/>
</dbReference>
<dbReference type="GO" id="GO:0030334">
    <property type="term" value="P:regulation of cell migration"/>
    <property type="evidence" value="ECO:0000250"/>
    <property type="project" value="UniProtKB"/>
</dbReference>
<dbReference type="GO" id="GO:0031641">
    <property type="term" value="P:regulation of myelination"/>
    <property type="evidence" value="ECO:0000315"/>
    <property type="project" value="MGI"/>
</dbReference>
<dbReference type="GO" id="GO:0010975">
    <property type="term" value="P:regulation of neuron projection development"/>
    <property type="evidence" value="ECO:0000314"/>
    <property type="project" value="UniProtKB"/>
</dbReference>
<dbReference type="GO" id="GO:0099175">
    <property type="term" value="P:regulation of postsynapse organization"/>
    <property type="evidence" value="ECO:0000314"/>
    <property type="project" value="SynGO"/>
</dbReference>
<dbReference type="GO" id="GO:0032880">
    <property type="term" value="P:regulation of protein localization"/>
    <property type="evidence" value="ECO:0000314"/>
    <property type="project" value="MGI"/>
</dbReference>
<dbReference type="GO" id="GO:0006417">
    <property type="term" value="P:regulation of translation"/>
    <property type="evidence" value="ECO:0007669"/>
    <property type="project" value="UniProtKB-KW"/>
</dbReference>
<dbReference type="GO" id="GO:0110002">
    <property type="term" value="P:regulation of tRNA methylation"/>
    <property type="evidence" value="ECO:0007669"/>
    <property type="project" value="Ensembl"/>
</dbReference>
<dbReference type="GO" id="GO:0034405">
    <property type="term" value="P:response to fluid shear stress"/>
    <property type="evidence" value="ECO:0007669"/>
    <property type="project" value="Ensembl"/>
</dbReference>
<dbReference type="GO" id="GO:0032094">
    <property type="term" value="P:response to food"/>
    <property type="evidence" value="ECO:0000314"/>
    <property type="project" value="MGI"/>
</dbReference>
<dbReference type="GO" id="GO:0060416">
    <property type="term" value="P:response to growth hormone"/>
    <property type="evidence" value="ECO:0000250"/>
    <property type="project" value="AgBase"/>
</dbReference>
<dbReference type="GO" id="GO:0009408">
    <property type="term" value="P:response to heat"/>
    <property type="evidence" value="ECO:0000316"/>
    <property type="project" value="MGI"/>
</dbReference>
<dbReference type="GO" id="GO:0009725">
    <property type="term" value="P:response to hormone"/>
    <property type="evidence" value="ECO:0000314"/>
    <property type="project" value="UniProtKB"/>
</dbReference>
<dbReference type="GO" id="GO:1990418">
    <property type="term" value="P:response to insulin-like growth factor stimulus"/>
    <property type="evidence" value="ECO:0000250"/>
    <property type="project" value="AgBase"/>
</dbReference>
<dbReference type="GO" id="GO:0006979">
    <property type="term" value="P:response to oxidative stress"/>
    <property type="evidence" value="ECO:0000250"/>
    <property type="project" value="ParkinsonsUK-UCL"/>
</dbReference>
<dbReference type="GO" id="GO:0070141">
    <property type="term" value="P:response to UV-A"/>
    <property type="evidence" value="ECO:0007669"/>
    <property type="project" value="Ensembl"/>
</dbReference>
<dbReference type="GO" id="GO:0003376">
    <property type="term" value="P:sphingosine-1-phosphate receptor signaling pathway"/>
    <property type="evidence" value="ECO:0007669"/>
    <property type="project" value="Ensembl"/>
</dbReference>
<dbReference type="GO" id="GO:0051146">
    <property type="term" value="P:striated muscle cell differentiation"/>
    <property type="evidence" value="ECO:0000316"/>
    <property type="project" value="MGI"/>
</dbReference>
<dbReference type="CDD" id="cd01241">
    <property type="entry name" value="PH_PKB"/>
    <property type="match status" value="1"/>
</dbReference>
<dbReference type="CDD" id="cd05594">
    <property type="entry name" value="STKc_PKB_alpha"/>
    <property type="match status" value="1"/>
</dbReference>
<dbReference type="FunFam" id="1.10.510.10:FF:000033">
    <property type="entry name" value="Non-specific serine/threonine protein kinase"/>
    <property type="match status" value="1"/>
</dbReference>
<dbReference type="FunFam" id="2.30.29.30:FF:000027">
    <property type="entry name" value="Non-specific serine/threonine protein kinase"/>
    <property type="match status" value="1"/>
</dbReference>
<dbReference type="FunFam" id="3.30.200.20:FF:000838">
    <property type="entry name" value="Non-specific serine/threonine protein kinase"/>
    <property type="match status" value="1"/>
</dbReference>
<dbReference type="Gene3D" id="3.30.200.20">
    <property type="entry name" value="Phosphorylase Kinase, domain 1"/>
    <property type="match status" value="1"/>
</dbReference>
<dbReference type="Gene3D" id="2.30.29.30">
    <property type="entry name" value="Pleckstrin-homology domain (PH domain)/Phosphotyrosine-binding domain (PTB)"/>
    <property type="match status" value="1"/>
</dbReference>
<dbReference type="Gene3D" id="1.10.510.10">
    <property type="entry name" value="Transferase(Phosphotransferase) domain 1"/>
    <property type="match status" value="1"/>
</dbReference>
<dbReference type="InterPro" id="IPR000961">
    <property type="entry name" value="AGC-kinase_C"/>
</dbReference>
<dbReference type="InterPro" id="IPR034676">
    <property type="entry name" value="Akt1"/>
</dbReference>
<dbReference type="InterPro" id="IPR011009">
    <property type="entry name" value="Kinase-like_dom_sf"/>
</dbReference>
<dbReference type="InterPro" id="IPR011993">
    <property type="entry name" value="PH-like_dom_sf"/>
</dbReference>
<dbReference type="InterPro" id="IPR001849">
    <property type="entry name" value="PH_domain"/>
</dbReference>
<dbReference type="InterPro" id="IPR039026">
    <property type="entry name" value="PH_PKB"/>
</dbReference>
<dbReference type="InterPro" id="IPR017892">
    <property type="entry name" value="Pkinase_C"/>
</dbReference>
<dbReference type="InterPro" id="IPR000719">
    <property type="entry name" value="Prot_kinase_dom"/>
</dbReference>
<dbReference type="InterPro" id="IPR017441">
    <property type="entry name" value="Protein_kinase_ATP_BS"/>
</dbReference>
<dbReference type="InterPro" id="IPR008271">
    <property type="entry name" value="Ser/Thr_kinase_AS"/>
</dbReference>
<dbReference type="PANTHER" id="PTHR24351">
    <property type="entry name" value="RIBOSOMAL PROTEIN S6 KINASE"/>
    <property type="match status" value="1"/>
</dbReference>
<dbReference type="Pfam" id="PF00169">
    <property type="entry name" value="PH"/>
    <property type="match status" value="1"/>
</dbReference>
<dbReference type="Pfam" id="PF00069">
    <property type="entry name" value="Pkinase"/>
    <property type="match status" value="1"/>
</dbReference>
<dbReference type="Pfam" id="PF00433">
    <property type="entry name" value="Pkinase_C"/>
    <property type="match status" value="1"/>
</dbReference>
<dbReference type="SMART" id="SM00233">
    <property type="entry name" value="PH"/>
    <property type="match status" value="1"/>
</dbReference>
<dbReference type="SMART" id="SM00133">
    <property type="entry name" value="S_TK_X"/>
    <property type="match status" value="1"/>
</dbReference>
<dbReference type="SMART" id="SM00220">
    <property type="entry name" value="S_TKc"/>
    <property type="match status" value="1"/>
</dbReference>
<dbReference type="SUPFAM" id="SSF50729">
    <property type="entry name" value="PH domain-like"/>
    <property type="match status" value="1"/>
</dbReference>
<dbReference type="SUPFAM" id="SSF56112">
    <property type="entry name" value="Protein kinase-like (PK-like)"/>
    <property type="match status" value="1"/>
</dbReference>
<dbReference type="PROSITE" id="PS51285">
    <property type="entry name" value="AGC_KINASE_CTER"/>
    <property type="match status" value="1"/>
</dbReference>
<dbReference type="PROSITE" id="PS50003">
    <property type="entry name" value="PH_DOMAIN"/>
    <property type="match status" value="1"/>
</dbReference>
<dbReference type="PROSITE" id="PS00107">
    <property type="entry name" value="PROTEIN_KINASE_ATP"/>
    <property type="match status" value="1"/>
</dbReference>
<dbReference type="PROSITE" id="PS50011">
    <property type="entry name" value="PROTEIN_KINASE_DOM"/>
    <property type="match status" value="1"/>
</dbReference>
<dbReference type="PROSITE" id="PS00108">
    <property type="entry name" value="PROTEIN_KINASE_ST"/>
    <property type="match status" value="1"/>
</dbReference>
<accession>P31750</accession>
<accession>Q62274</accession>
<accession>Q6GSA6</accession>
<organism>
    <name type="scientific">Mus musculus</name>
    <name type="common">Mouse</name>
    <dbReference type="NCBI Taxonomy" id="10090"/>
    <lineage>
        <taxon>Eukaryota</taxon>
        <taxon>Metazoa</taxon>
        <taxon>Chordata</taxon>
        <taxon>Craniata</taxon>
        <taxon>Vertebrata</taxon>
        <taxon>Euteleostomi</taxon>
        <taxon>Mammalia</taxon>
        <taxon>Eutheria</taxon>
        <taxon>Euarchontoglires</taxon>
        <taxon>Glires</taxon>
        <taxon>Rodentia</taxon>
        <taxon>Myomorpha</taxon>
        <taxon>Muroidea</taxon>
        <taxon>Muridae</taxon>
        <taxon>Murinae</taxon>
        <taxon>Mus</taxon>
        <taxon>Mus</taxon>
    </lineage>
</organism>
<comment type="function">
    <text evidence="1 3 9 11 12 14 16 21 27 34 35 37 40 41 42 44 45 46 47 49 51 52 53">AKT1 is one of 3 closely related serine/threonine-protein kinases (AKT1, AKT2 and AKT3) called the AKT kinase, and which regulate many processes including metabolism, proliferation, cell survival, growth and angiogenesis (PubMed:11882383, PubMed:21432781, PubMed:21620960, PubMed:21954288, PubMed:26095253, PubMed:26107252, PubMed:30504268, PubMed:32350463). This is mediated through serine and/or threonine phosphorylation of a range of downstream substrates. Over 100 substrate candidates have been reported so far, but for most of them, no isoform specificity has been reported (PubMed:11882383, PubMed:21432781, PubMed:21620960, PubMed:21954288, PubMed:23684622, PubMed:26235620). AKT is responsible of the regulation of glucose uptake by mediating insulin-induced translocation of the SLC2A4/GLUT4 glucose transporter to the cell surface (PubMed:9415393). Phosphorylation of PTPN1 at 'Ser-50' negatively modulates its phosphatase activity preventing dephosphorylation of the insulin receptor and the attenuation of insulin signaling (PubMed:11579209). Phosphorylation of TBC1D4 triggers the binding of this effector to inhibitory 14-3-3 proteins, which is required for insulin-stimulated glucose transport (PubMed:11994271). AKT also regulates the storage of glucose in the form of glycogen by phosphorylating GSK3A at 'Ser-21' and GSK3B at 'Ser-9', resulting in inhibition of its kinase activity (PubMed:22057101). Phosphorylation of GSK3 isoforms by AKT is also thought to be one mechanism by which cell proliferation is driven (PubMed:22057101). AKT also regulates cell survival via the phosphorylation of MAP3K5 (apoptosis signal-related kinase). Phosphorylation of 'Ser-83' decreases MAP3K5 kinase activity stimulated by oxidative stress and thereby prevents apoptosis. AKT mediates insulin-stimulated protein synthesis by phosphorylating TSC2 at 'Ser-939' and 'Thr-1462', thereby activating the mTORC1 signaling pathway, and leading to both phosphorylation of 4E-BP1 and in activation of RPS6KB1. Also regulates the mTORC1 signaling pathway by catalyzing phosphorylation of CASTOR1 and DEPDC5. AKT plays a role as key modulator of the AKT-mTOR signaling pathway controlling the tempo of the process of newborn neurons integration during adult neurogenesis, including correct neuron positioning, dendritic development and synapse formation (PubMed:19778506). Part of a positive feedback loop of mTORC2 signaling by mediating phosphorylation of MAPKAP1/SIN1, promoting mTORC2 activation (PubMed:23684622, PubMed:26235620). AKT is involved in the phosphorylation of members of the FOXO factors (Forkhead family of transcription factors), leading to binding of 14-3-3 proteins and cytoplasmic localization. In particular, FOXO1 is phosphorylated at 'Thr-24', 'Ser-256' and 'Ser-319'. FOXO3 and FOXO4 are phosphorylated on equivalent sites. AKT has an important role in the regulation of NF-kappa-B-dependent gene transcription and positively regulates the activity of CREB1 (cyclic AMP (cAMP)-response element binding protein). The phosphorylation of CREB1 induces the binding of accessory proteins that are necessary for the transcription of pro-survival genes such as BCL2 and MCL1 (By similarity). AKT phosphorylates 'Ser-454' on ATP citrate lyase (ACLY), thereby potentially regulating ACLY activity and fatty acid synthesis (By similarity). Activates the 3B isoform of cyclic nucleotide phosphodiesterase (PDE3B) via phosphorylation of 'Ser-273', resulting in reduced cyclic AMP levels and inhibition of lipolysis (PubMed:10454575). Phosphorylates PIKFYVE on 'Ser-318', which results in increased PI(3)P-5 activity (By similarity). The Rho GTPase-activating protein DLC1 is another substrate and its phosphorylation is implicated in the regulation cell proliferation and cell growth (By similarity). Signals downstream of phosphatidylinositol 3-kinase (PI(3)K) to mediate the effects of various growth factors such as platelet-derived growth factor (PDGF), epidermal growth factor (EGF), insulin and insulin-like growth factor 1 (IGF1) (PubMed:11282895, PubMed:18288188). AKT mediates the antiapoptotic effects of IGF1 (PubMed:11282895). Essential for the SPATA13-mediated regulation of cell migration and adhesion assembly and disassembly (By similarity). May be involved in the regulation of the placental development (PubMed:12783884). Phosphorylates STK4/MST1 at 'Thr-120' and 'Thr-387' leading to inhibition of its: kinase activity, nuclear translocation, autophosphorylation and ability to phosphorylate FOXO3. Phosphorylates STK3/MST2 at 'Thr-117' and 'Thr-384' leading to inhibition of its: cleavage, kinase activity, autophosphorylation at Thr-180, binding to RASSF1 and nuclear translocation. Phosphorylates SRPK2 and enhances its kinase activity towards SRSF2 and ACIN1 and promotes its nuclear translocation. Phosphorylates RAF1 at 'Ser-259' and negatively regulates its activity. Phosphorylation of BAD stimulates its pro-apoptotic activity. Phosphorylates KAT6A at 'Thr-369' and this phosphorylation inhibits the interaction of KAT6A with PML and negatively regulates its acetylation activity towards p53/TP53. Phosphorylates palladin (PALLD), modulating cytoskeletal organization and cell motility. Phosphorylates prohibitin (PHB), playing an important role in cell metabolism and proliferation. Phosphorylates CDKN1A, for which phosphorylation at 'Thr-145' induces its release from CDK2 and cytoplasmic relocalization. These recent findings indicate that the AKT1 isoform has a more specific role in cell motility and proliferation. Phosphorylates CLK2 thereby controlling cell survival to ionizing radiation (By similarity). Phosphorylates PCK1 at 'Ser-90', reducing the binding affinity of PCK1 to oxaloacetate and changing PCK1 into an atypical protein kinase activity using GTP as donor (By similarity). Also acts as an activator of TMEM175 potassium channel activity in response to growth factors: forms the lysoK(GF) complex together with TMEM175 and acts by promoting TMEM175 channel activation, independently of its protein kinase activity (PubMed:32228865). Acts as a negative regulator of the cGAS-STING pathway by mediating phosphorylation of CGAS during mitosis, leading to its inhibition (PubMed:26440888). Acts as a regulator of mitochondrial calcium uptake by mediating phosphorylation of MICU1 in the mitochondrial intermembrane space, impairing MICU1 maturation (PubMed:30504268). Acts as an inhibitor of tRNA methylation by mediating phosphorylation of the N-terminus of METTL1, thereby inhibiting METTL1 methyltransferase activity (By similarity). In response to LPAR1 receptor pathway activation, phosphorylates Rabin8/RAB3IP which alters its activity and phosphorylates WDR44 which induces WDR44 binding to Rab11, thereby switching Rab11 vesicular function from preciliary trafficking to endocytic recycling (By similarity).</text>
</comment>
<comment type="catalytic activity">
    <reaction evidence="35 44 45">
        <text>L-seryl-[protein] + ATP = O-phospho-L-seryl-[protein] + ADP + H(+)</text>
        <dbReference type="Rhea" id="RHEA:17989"/>
        <dbReference type="Rhea" id="RHEA-COMP:9863"/>
        <dbReference type="Rhea" id="RHEA-COMP:11604"/>
        <dbReference type="ChEBI" id="CHEBI:15378"/>
        <dbReference type="ChEBI" id="CHEBI:29999"/>
        <dbReference type="ChEBI" id="CHEBI:30616"/>
        <dbReference type="ChEBI" id="CHEBI:83421"/>
        <dbReference type="ChEBI" id="CHEBI:456216"/>
        <dbReference type="EC" id="2.7.11.1"/>
    </reaction>
</comment>
<comment type="catalytic activity">
    <reaction evidence="37 42">
        <text>L-threonyl-[protein] + ATP = O-phospho-L-threonyl-[protein] + ADP + H(+)</text>
        <dbReference type="Rhea" id="RHEA:46608"/>
        <dbReference type="Rhea" id="RHEA-COMP:11060"/>
        <dbReference type="Rhea" id="RHEA-COMP:11605"/>
        <dbReference type="ChEBI" id="CHEBI:15378"/>
        <dbReference type="ChEBI" id="CHEBI:30013"/>
        <dbReference type="ChEBI" id="CHEBI:30616"/>
        <dbReference type="ChEBI" id="CHEBI:61977"/>
        <dbReference type="ChEBI" id="CHEBI:456216"/>
        <dbReference type="EC" id="2.7.11.1"/>
    </reaction>
</comment>
<comment type="activity regulation">
    <text evidence="45 50">Three specific sites, one in the kinase domain (Thr-308) and the two other ones in the C-terminal regulatory region (Ser-473 and Tyr-474), need to be phosphorylated for its full activation.</text>
</comment>
<comment type="subunit">
    <text evidence="1 3 13 17 18 19 20 22 26 28 29 30 36 38">Interacts with and phosphorylated by PDPK1 (By similarity). Interacts with AGAP2 (isoform 2/PIKE-A); the interaction occurs in the presence of guanine nucleotides. Interacts with AKTIP. Interacts (via PH domain) with MTCP1, TCL1A and TCL1B. Interacts with CDKN1B; the interaction phosphorylates CDKN1B promoting 14-3-3 binding and cell-cycle progression. Interacts with MAP3K5 and TRAF6. Interacts with BAD, PPP2R5B, STK3 and STK4. Interacts (via PH domain) with SIRT1. Interacts with SRPK2 in a phosphorylation-dependent manner. Interacts with TRIM13; the interaction ubiquitinates AKT1 leading to its proteasomal degradation. Interacts with RAF1 (By similarity). Interacts (via the C-terminus) with CCDC88A (via its C-terminus) and THEM4 (via its C-terminus). Interacts with GRB10; the interaction leads to GRB10 phosphorylation thus promoting YWHAE-binding. Interacts with KCTD20 (PubMed:24156551). Interacts with BTBD10 (PubMed:18160256). Interacts with PA2G4 (By similarity). Interacts with KIF14; the interaction is detected in the plasma membrane upon INS stimulation and promotes AKT1 phosphorylation (By similarity). Interacts with FAM83B; activates the PI3K/AKT signaling cascade (By similarity). Interacts with WDFY2 (via WD repeats 1-3) (PubMed:16792529, PubMed:20189988). Forms a complex with WDFY2 and FOXO1 (PubMed:18388859). Interacts with FAM168A (By similarity). Interacts with SYAP1 (via phosphorylated form and BSD domain); this interaction is enhanced in a mTORC2-mediated manner in response to epidermal growth factor (EGF) stimulation and activates AKT1 (PubMed:23300339). Interacts with PKHM3 (PubMed:19028694). Interacts with FKBP5/FKBP51; promoting interaction between Akt/AKT1 and PHLPP1, thereby enhancing dephosphorylation and subsequent activation of Akt/AKT1 (By similarity). Interacts with TMEM175; leading to formation of the lysoK(GF) complex (By similarity).</text>
</comment>
<comment type="interaction">
    <interactant intactId="EBI-298707">
        <id>P31750</id>
    </interactant>
    <interactant intactId="EBI-1009256">
        <id>Q9Z2V5</id>
        <label>Hdac6</label>
    </interactant>
    <organismsDiffer>false</organismsDiffer>
    <experiments>2</experiments>
</comment>
<comment type="interaction">
    <interactant intactId="EBI-298707">
        <id>P31750</id>
    </interactant>
    <interactant intactId="EBI-78930">
        <id>P07901</id>
        <label>Hsp90aa1</label>
    </interactant>
    <organismsDiffer>false</organismsDiffer>
    <experiments>6</experiments>
</comment>
<comment type="interaction">
    <interactant intactId="EBI-298707">
        <id>P31750</id>
    </interactant>
    <interactant intactId="EBI-298680">
        <id>P05480</id>
        <label>Src</label>
    </interactant>
    <organismsDiffer>false</organismsDiffer>
    <experiments>3</experiments>
</comment>
<comment type="interaction">
    <interactant intactId="EBI-298707">
        <id>P31750</id>
    </interactant>
    <interactant intactId="EBI-448962">
        <id>Q8K4K2</id>
        <label>Trib3</label>
    </interactant>
    <organismsDiffer>false</organismsDiffer>
    <experiments>5</experiments>
</comment>
<comment type="interaction">
    <interactant intactId="EBI-298707">
        <id>P31750</id>
    </interactant>
    <interactant intactId="EBI-413074">
        <id>P62991</id>
        <label>Ubc</label>
    </interactant>
    <organismsDiffer>false</organismsDiffer>
    <experiments>3</experiments>
</comment>
<comment type="interaction">
    <interactant intactId="EBI-298707">
        <id>P31750</id>
    </interactant>
    <interactant intactId="EBI-714559">
        <id>P32121</id>
        <label>ARRB2</label>
    </interactant>
    <organismsDiffer>true</organismsDiffer>
    <experiments>3</experiments>
</comment>
<comment type="interaction">
    <interactant intactId="EBI-298707">
        <id>P31750</id>
    </interactant>
    <interactant intactId="EBI-3942563">
        <id>Q1W6H9</id>
        <label>FAM110C</label>
    </interactant>
    <organismsDiffer>true</organismsDiffer>
    <experiments>3</experiments>
</comment>
<comment type="interaction">
    <interactant intactId="EBI-298707">
        <id>P31750</id>
    </interactant>
    <interactant intactId="EBI-1046542">
        <id>Q8TCU6</id>
        <label>PREX1</label>
    </interactant>
    <organismsDiffer>true</organismsDiffer>
    <experiments>2</experiments>
</comment>
<comment type="interaction">
    <interactant intactId="EBI-298707">
        <id>P31750</id>
    </interactant>
    <interactant intactId="EBI-7683985">
        <id>P03165</id>
        <label>X</label>
    </interactant>
    <organismsDiffer>true</organismsDiffer>
    <experiments>2</experiments>
</comment>
<comment type="subcellular location">
    <subcellularLocation>
        <location evidence="15 22 26 29">Cytoplasm</location>
    </subcellularLocation>
    <subcellularLocation>
        <location evidence="22 29">Nucleus</location>
    </subcellularLocation>
    <subcellularLocation>
        <location evidence="26">Cell membrane</location>
    </subcellularLocation>
    <subcellularLocation>
        <location evidence="45">Mitochondrion intermembrane space</location>
    </subcellularLocation>
    <text evidence="1 45">Nucleus after activation by integrin-linked protein kinase 1 (ILK1) (By similarity). Nuclear translocation is enhanced by interaction with TCL1A (By similarity). Phosphorylation on Tyr-176 by TNK2 results in its localization to the cell membrane where it is targeted for further phosphorylations on Thr-308 and Ser-473 leading to its activation and the activated form translocates to the nucleus (By similarity). Colocalizes with WDFY2 in intracellular vesicles (By similarity). Also localizes to mitochondrial intermembrane space in response to rapamycin treatment (PubMed:30504268).</text>
</comment>
<comment type="tissue specificity">
    <text evidence="48">Widely expressed. Low levels found in liver with slightly higher levels present in thymus and testis.</text>
</comment>
<comment type="developmental stage">
    <text evidence="16">Expressed in trophoblast and vessel endothelial cells of the placenta and in the brain at 14.5 dpc (at protein level).</text>
</comment>
<comment type="domain">
    <text evidence="1 3">Binding of the PH domain to phosphatidylinositol 3,4,5-trisphosphate (PI(3,4,5)P3) following phosphatidylinositol 3-kinase alpha (PIK3CA) activity results in its targeting to the plasma membrane (By similarity). PI(3,4,5)P3 is also required for phosphorylation at Thr-308 and subsequent activation (By similarity). The PH domain mediates interaction with TNK2 and Tyr-176 is also essential for this interaction (By similarity).</text>
</comment>
<comment type="domain">
    <text evidence="1">The AGC-kinase C-terminal mediates interaction with THEM4.</text>
</comment>
<comment type="PTM">
    <text evidence="1 21 25">O-GlcNAcylation at Thr-305 and Thr-312 inhibits activating phosphorylation at Thr-308 via disrupting the interaction between AKT1 and PDPK1 (By similarity). O-GlcNAcylation at Ser-473 also probably interferes with phosphorylation at this site (PubMed:18288188, PubMed:18570920).</text>
</comment>
<comment type="PTM">
    <text evidence="1 23 24 31 33 39 40 41 42 45 47 50">Phosphorylation on Thr-308, Ser-473 and Tyr-474 is required for full activity (PubMed:21321111, PubMed:26095253, PubMed:26107252, PubMed:26235620, PubMed:30504268, PubMed:32350463, PubMed:9565622). Phosphorylation of the activation loop at Thr-308 by PDPK1/PDK1 is a prerequisite for full activation (By similarity). Phosphorylation by mTORC2 in response to growth factors plays a key role in AKT1 activation: mTORC2 phosphorylates different sites depending on the context, such as Thr-450, Ser-473, Ser-477 or Thr-479, thereby facilitating subsequent phosphorylation of the activation loop by PDPK1/PDK1 (PubMed:18566586, PubMed:18566587, PubMed:21045808, PubMed:24670654, PubMed:26095253, PubMed:26107252, PubMed:32350463). Phosphorylation at Ser-473 by mTORC2 promotes ubiquitination and degradation by the proteasome (PubMed:21321111). Also phosphorylated at Ser-477 and Thr-479 by CDK2, facilitating subsequent phosphorylation of the activation loop by PDPK1/PDK1 (PubMed:24670654). Activated TNK2 phosphorylates it on Tyr-176 resulting in its binding to the anionic plasma membrane phospholipid PA (By similarity). This phosphorylated form localizes to the cell membrane, where it is targeted by PDPK1 and PDPK2 for further phosphorylations on Thr-308 and Ser-473 leading to its activation (By similarity). Phosphorylated at Thr-308 and Ser-473 by IKBKE and TBK1 (By similarity). Ser-473 phosphorylation is enhanced by interaction with AGAP2 isoform 2 (PIKE-A) (By similarity). Ser-473 phosphorylation is enhanced by signaling through activated FLT3 (By similarity). Ser-473 is dephosphorylated by PHLPP (By similarity). Dephosphorylated at Thr-308 and Ser-473 by PP2A phosphatase (PubMed:32350463). The phosphorylated form of PPP2R5B is required for bridging AKT1 with PP2A phosphatase (By similarity). Ser-473 is dephosphorylated by CPPED1, leading to termination of signaling (By similarity). AIM2 acts as an inhibitor of AKT1 by inhibiting phosphorylation Ser-473: AIM2 acts both by inhibiting the activity of PRKDC/DNA-PK kinase and promoting dephosphorylation by PP2A phosphatase (PubMed:26107252, PubMed:32350463).</text>
</comment>
<comment type="PTM">
    <text evidence="10 16 18 21 30 32 33 35">Ubiquitinated; undergoes both 'Lys-48'- and 'Lys-63'-linked polyubiquitination. TRAF6-induced 'Lys-63'-linked AKT1 ubiquitination is critical for phosphorylation and activation. When ubiquitinated, it translocates to the plasma membrane, where it becomes phosphorylated. When fully phosphorylated and translocated into the nucleus, undergoes 'Lys-48'-polyubiquitination catalyzed by TTC3, leading to its degradation by the proteasome. Also ubiquitinated by TRIM13 leading to its proteasomal degradation. Ubiquitinated via 'Lys-48'-linked polyubiquitination by ZNRF1, leading to its degradation by the proteasome. Phosphorylated, undergoes 'Lys-48'-linked polyubiquitination preferentially at Lys-284 catalyzed by MUL1, leading to its proteasomal degradation.</text>
</comment>
<comment type="PTM">
    <text evidence="1">Acetylated on Lys-14 and Lys-20 by the histone acetyltransferases EP300 and KAT2B. Acetylation results in reduced phosphorylation and inhibition of activity. Deacetylated at Lys-14 and Lys-20 by SIRT1. SIRT1-mediated deacetylation relieves the inhibition (By similarity).</text>
</comment>
<comment type="PTM">
    <text evidence="15">Cleavage by caspase-3/CASP3 (PubMed:12124386). Cleaved at the caspase-3 consensus site Asp-462 during apoptosis, resulting in down-regulation of the AKT signaling pathway and decreased cell survival (PubMed:12124386).</text>
</comment>
<comment type="disruption phenotype">
    <text evidence="16">Show fetal growth impairment and reduced vascularization in the placenta; majority of pups died within 10 days.</text>
</comment>
<comment type="similarity">
    <text evidence="54">Belongs to the protein kinase superfamily. AGC Ser/Thr protein kinase family. RAC subfamily.</text>
</comment>
<comment type="caution">
    <text evidence="54">In light of strong homologies in the primary amino acid sequence, the 3 AKT kinases were long surmised to play redundant and overlapping roles. More recent studies has brought into question the redundancy within AKT kinase isoforms and instead pointed to isoform specific functions in different cellular events and diseases. AKT1 is more specifically involved in cellular survival pathways, by inhibiting apoptotic processes; whereas AKT2 is more specific for the insulin receptor signaling pathway. Moreover, while AKT1 and AKT2 are often implicated in many aspects of cellular transformation, the 2 isoforms act in a complementary opposing manner. The role of AKT3 is less clear, though it appears to be predominantly expressed in brain.</text>
</comment>
<feature type="chain" id="PRO_0000085606" description="RAC-alpha serine/threonine-protein kinase">
    <location>
        <begin position="1"/>
        <end position="480"/>
    </location>
</feature>
<feature type="domain" description="PH" evidence="4">
    <location>
        <begin position="5"/>
        <end position="108"/>
    </location>
</feature>
<feature type="domain" description="Protein kinase" evidence="5">
    <location>
        <begin position="150"/>
        <end position="408"/>
    </location>
</feature>
<feature type="domain" description="AGC-kinase C-terminal" evidence="6">
    <location>
        <begin position="409"/>
        <end position="480"/>
    </location>
</feature>
<feature type="region of interest" description="Disordered" evidence="8">
    <location>
        <begin position="114"/>
        <end position="137"/>
    </location>
</feature>
<feature type="region of interest" description="Disordered" evidence="8">
    <location>
        <begin position="450"/>
        <end position="480"/>
    </location>
</feature>
<feature type="active site" description="Proton acceptor" evidence="5 7">
    <location>
        <position position="274"/>
    </location>
</feature>
<feature type="binding site" evidence="1">
    <location>
        <begin position="14"/>
        <end position="19"/>
    </location>
    <ligand>
        <name>1D-myo-inositol 1,3,4,5-tetrakisphosphate</name>
        <dbReference type="ChEBI" id="CHEBI:57895"/>
    </ligand>
</feature>
<feature type="binding site" evidence="1">
    <location>
        <begin position="23"/>
        <end position="25"/>
    </location>
    <ligand>
        <name>1D-myo-inositol 1,3,4,5-tetrakisphosphate</name>
        <dbReference type="ChEBI" id="CHEBI:57895"/>
    </ligand>
</feature>
<feature type="binding site" evidence="1">
    <location>
        <position position="53"/>
    </location>
    <ligand>
        <name>1D-myo-inositol 1,3,4,5-tetrakisphosphate</name>
        <dbReference type="ChEBI" id="CHEBI:57895"/>
    </ligand>
</feature>
<feature type="binding site" evidence="1">
    <location>
        <position position="86"/>
    </location>
    <ligand>
        <name>1D-myo-inositol 1,3,4,5-tetrakisphosphate</name>
        <dbReference type="ChEBI" id="CHEBI:57895"/>
    </ligand>
</feature>
<feature type="binding site" evidence="5">
    <location>
        <begin position="156"/>
        <end position="164"/>
    </location>
    <ligand>
        <name>ATP</name>
        <dbReference type="ChEBI" id="CHEBI:30616"/>
    </ligand>
</feature>
<feature type="binding site">
    <location>
        <position position="179"/>
    </location>
    <ligand>
        <name>ATP</name>
        <dbReference type="ChEBI" id="CHEBI:30616"/>
    </ligand>
</feature>
<feature type="site" description="Cleavage; by caspase-3" evidence="15">
    <location>
        <position position="462"/>
    </location>
</feature>
<feature type="modified residue" description="N6-acetyllysine" evidence="1">
    <location>
        <position position="14"/>
    </location>
</feature>
<feature type="modified residue" description="N6-acetyllysine" evidence="1">
    <location>
        <position position="20"/>
    </location>
</feature>
<feature type="modified residue" description="Phosphoserine" evidence="1">
    <location>
        <position position="124"/>
    </location>
</feature>
<feature type="modified residue" description="Phosphoserine; alternate" evidence="1">
    <location>
        <position position="126"/>
    </location>
</feature>
<feature type="modified residue" description="Phosphoserine; alternate" evidence="58 59">
    <location>
        <position position="129"/>
    </location>
</feature>
<feature type="modified residue" description="Phosphotyrosine; by TNK2" evidence="30">
    <location>
        <position position="176"/>
    </location>
</feature>
<feature type="modified residue" description="Phosphothreonine; by IKKE, PDPK1 and TBK1" evidence="18 21 30 42 43">
    <location>
        <position position="308"/>
    </location>
</feature>
<feature type="modified residue" description="Phosphothreonine" evidence="1">
    <location>
        <position position="448"/>
    </location>
</feature>
<feature type="modified residue" description="Phosphothreonine; by MTOR" evidence="23 31">
    <location>
        <position position="450"/>
    </location>
</feature>
<feature type="modified residue" description="Phosphoserine; by IKKE, MTOR, PRKDC and TBK1; alternate" evidence="33 40 41 43 45 47 55 56 57">
    <location>
        <position position="473"/>
    </location>
</feature>
<feature type="modified residue" description="Phosphotyrosine" evidence="1">
    <location>
        <position position="474"/>
    </location>
</feature>
<feature type="modified residue" description="Phosphoserine; by CDK2 and MTOR" evidence="39">
    <location>
        <position position="477"/>
    </location>
</feature>
<feature type="modified residue" description="Phosphothreonine; by CDK2 and MTOR" evidence="39">
    <location>
        <position position="479"/>
    </location>
</feature>
<feature type="glycosylation site" description="O-linked (GlcNAc) serine; alternate" evidence="1">
    <location>
        <position position="126"/>
    </location>
</feature>
<feature type="glycosylation site" description="O-linked (GlcNAc) serine; alternate" evidence="1">
    <location>
        <position position="129"/>
    </location>
</feature>
<feature type="glycosylation site" description="O-linked (GlcNAc) threonine" evidence="1">
    <location>
        <position position="305"/>
    </location>
</feature>
<feature type="glycosylation site" description="O-linked (GlcNAc) threonine" evidence="1">
    <location>
        <position position="312"/>
    </location>
</feature>
<feature type="glycosylation site" description="O-linked (GlcNAc) serine; alternate" evidence="25">
    <location>
        <position position="473"/>
    </location>
</feature>
<feature type="disulfide bond" evidence="1">
    <location>
        <begin position="60"/>
        <end position="77"/>
    </location>
</feature>
<feature type="disulfide bond" evidence="2">
    <location>
        <begin position="296"/>
        <end position="310"/>
    </location>
</feature>
<feature type="cross-link" description="Glycyl lysine isopeptide (Lys-Gly) (interchain with G-Cter in ubiquitin)" evidence="1">
    <location>
        <position position="284"/>
    </location>
</feature>
<feature type="mutagenesis site" description="Significant loss of interaction with TNK2. Loss of membrane localization. Significant reduction in phosphorylation on Ser-473." evidence="30">
    <original>Y</original>
    <variation>F</variation>
    <location>
        <position position="176"/>
    </location>
</feature>
<feature type="mutagenesis site" description="In kinase dead mutant; lacks kinase activity. Overexpression inhibits insulin-stimulated translocation of SLC2A4/GLUT4 in a dominant negative manner." evidence="44 49">
    <original>K</original>
    <variation>A</variation>
    <location>
        <position position="179"/>
    </location>
</feature>
<feature type="mutagenesis site" description="Does not affect ubiquitination by ZNRF1." evidence="35">
    <original>T</original>
    <variation>A</variation>
    <location>
        <position position="308"/>
    </location>
</feature>
<feature type="mutagenesis site" description="Does not affect caspase-3 cleavage." evidence="15">
    <original>D</original>
    <variation>N</variation>
    <location>
        <position position="434"/>
    </location>
</feature>
<feature type="mutagenesis site" description="Does not affect caspase-3 cleavage." evidence="15">
    <original>D</original>
    <variation>N</variation>
    <location>
        <position position="456"/>
    </location>
</feature>
<feature type="mutagenesis site" description="Abolishes caspase-3 cleavage and increases cell survival. Does not affect kinase activity." evidence="15">
    <original>D</original>
    <variation>N</variation>
    <location>
        <position position="462"/>
    </location>
</feature>
<feature type="mutagenesis site" description="Does not affect ubiquitination by ZNRF1." evidence="31 35">
    <original>S</original>
    <variation>A</variation>
    <location>
        <position position="473"/>
    </location>
</feature>
<feature type="mutagenesis site" description="Impaired phosphorylation by CDK2 or mTORC2, leading to decreased activity." evidence="39">
    <original>SGT</original>
    <variation>AGA</variation>
    <location>
        <begin position="477"/>
        <end position="479"/>
    </location>
</feature>
<feature type="mutagenesis site" description="Mimics phosphorylation, leading to increased activity." evidence="39">
    <original>SGT</original>
    <variation>DGE</variation>
    <location>
        <begin position="477"/>
        <end position="479"/>
    </location>
</feature>
<feature type="sequence conflict" description="In Ref. 3; AAA18254." evidence="54" ref="3">
    <original>R</original>
    <variation>A</variation>
    <location>
        <position position="367"/>
    </location>
</feature>
<name>AKT1_MOUSE</name>
<reference key="1">
    <citation type="journal article" date="1993" name="Oncogene">
        <title>Structure, expression and chromosomal mapping of c-akt: relationship to v-akt and its implications.</title>
        <authorList>
            <person name="Bellacosa A."/>
            <person name="Franke T.F."/>
            <person name="Gonzalez-Portal M.E."/>
            <person name="Datta K."/>
            <person name="Taguchi T."/>
            <person name="Gardner J."/>
            <person name="Cheng J.Q."/>
            <person name="Testa J.R."/>
            <person name="Tsichlis P.N."/>
        </authorList>
    </citation>
    <scope>NUCLEOTIDE SEQUENCE [MRNA]</scope>
    <scope>TISSUE SPECIFICITY</scope>
    <source>
        <strain>AKR/J</strain>
        <tissue>Thymus</tissue>
    </source>
</reference>
<reference key="2">
    <citation type="journal article" date="2003" name="J. Biol. Chem.">
        <title>Protein kinase B alpha/Akt1 regulates placental development and fetal growth.</title>
        <authorList>
            <person name="Yang Z.Z."/>
            <person name="Tschopp O."/>
            <person name="Hemmings-Mieszczak M."/>
            <person name="Feng J."/>
            <person name="Brodbeck D."/>
            <person name="Perentes E."/>
            <person name="Hemmings B.A."/>
        </authorList>
    </citation>
    <scope>NUCLEOTIDE SEQUENCE [GENOMIC DNA]</scope>
    <scope>FUNCTION</scope>
    <scope>PHOSPHORYLATION AT SER-473</scope>
    <scope>DISRUPTION PHENOTYPE</scope>
    <scope>DEVELOPMENTAL STAGE</scope>
    <source>
        <strain>129/SvJ</strain>
    </source>
</reference>
<reference key="3">
    <citation type="submission" date="1992-06" db="EMBL/GenBank/DDBJ databases">
        <title>Complete nucleotide coding sequence for murine rac (related to A and C kinases) protein kinase.</title>
        <authorList>
            <person name="Bousquets X."/>
            <person name="Powell C.T."/>
        </authorList>
    </citation>
    <scope>NUCLEOTIDE SEQUENCE [MRNA]</scope>
</reference>
<reference key="4">
    <citation type="journal article" date="2005" name="Science">
        <title>The transcriptional landscape of the mammalian genome.</title>
        <authorList>
            <person name="Carninci P."/>
            <person name="Kasukawa T."/>
            <person name="Katayama S."/>
            <person name="Gough J."/>
            <person name="Frith M.C."/>
            <person name="Maeda N."/>
            <person name="Oyama R."/>
            <person name="Ravasi T."/>
            <person name="Lenhard B."/>
            <person name="Wells C."/>
            <person name="Kodzius R."/>
            <person name="Shimokawa K."/>
            <person name="Bajic V.B."/>
            <person name="Brenner S.E."/>
            <person name="Batalov S."/>
            <person name="Forrest A.R."/>
            <person name="Zavolan M."/>
            <person name="Davis M.J."/>
            <person name="Wilming L.G."/>
            <person name="Aidinis V."/>
            <person name="Allen J.E."/>
            <person name="Ambesi-Impiombato A."/>
            <person name="Apweiler R."/>
            <person name="Aturaliya R.N."/>
            <person name="Bailey T.L."/>
            <person name="Bansal M."/>
            <person name="Baxter L."/>
            <person name="Beisel K.W."/>
            <person name="Bersano T."/>
            <person name="Bono H."/>
            <person name="Chalk A.M."/>
            <person name="Chiu K.P."/>
            <person name="Choudhary V."/>
            <person name="Christoffels A."/>
            <person name="Clutterbuck D.R."/>
            <person name="Crowe M.L."/>
            <person name="Dalla E."/>
            <person name="Dalrymple B.P."/>
            <person name="de Bono B."/>
            <person name="Della Gatta G."/>
            <person name="di Bernardo D."/>
            <person name="Down T."/>
            <person name="Engstrom P."/>
            <person name="Fagiolini M."/>
            <person name="Faulkner G."/>
            <person name="Fletcher C.F."/>
            <person name="Fukushima T."/>
            <person name="Furuno M."/>
            <person name="Futaki S."/>
            <person name="Gariboldi M."/>
            <person name="Georgii-Hemming P."/>
            <person name="Gingeras T.R."/>
            <person name="Gojobori T."/>
            <person name="Green R.E."/>
            <person name="Gustincich S."/>
            <person name="Harbers M."/>
            <person name="Hayashi Y."/>
            <person name="Hensch T.K."/>
            <person name="Hirokawa N."/>
            <person name="Hill D."/>
            <person name="Huminiecki L."/>
            <person name="Iacono M."/>
            <person name="Ikeo K."/>
            <person name="Iwama A."/>
            <person name="Ishikawa T."/>
            <person name="Jakt M."/>
            <person name="Kanapin A."/>
            <person name="Katoh M."/>
            <person name="Kawasawa Y."/>
            <person name="Kelso J."/>
            <person name="Kitamura H."/>
            <person name="Kitano H."/>
            <person name="Kollias G."/>
            <person name="Krishnan S.P."/>
            <person name="Kruger A."/>
            <person name="Kummerfeld S.K."/>
            <person name="Kurochkin I.V."/>
            <person name="Lareau L.F."/>
            <person name="Lazarevic D."/>
            <person name="Lipovich L."/>
            <person name="Liu J."/>
            <person name="Liuni S."/>
            <person name="McWilliam S."/>
            <person name="Madan Babu M."/>
            <person name="Madera M."/>
            <person name="Marchionni L."/>
            <person name="Matsuda H."/>
            <person name="Matsuzawa S."/>
            <person name="Miki H."/>
            <person name="Mignone F."/>
            <person name="Miyake S."/>
            <person name="Morris K."/>
            <person name="Mottagui-Tabar S."/>
            <person name="Mulder N."/>
            <person name="Nakano N."/>
            <person name="Nakauchi H."/>
            <person name="Ng P."/>
            <person name="Nilsson R."/>
            <person name="Nishiguchi S."/>
            <person name="Nishikawa S."/>
            <person name="Nori F."/>
            <person name="Ohara O."/>
            <person name="Okazaki Y."/>
            <person name="Orlando V."/>
            <person name="Pang K.C."/>
            <person name="Pavan W.J."/>
            <person name="Pavesi G."/>
            <person name="Pesole G."/>
            <person name="Petrovsky N."/>
            <person name="Piazza S."/>
            <person name="Reed J."/>
            <person name="Reid J.F."/>
            <person name="Ring B.Z."/>
            <person name="Ringwald M."/>
            <person name="Rost B."/>
            <person name="Ruan Y."/>
            <person name="Salzberg S.L."/>
            <person name="Sandelin A."/>
            <person name="Schneider C."/>
            <person name="Schoenbach C."/>
            <person name="Sekiguchi K."/>
            <person name="Semple C.A."/>
            <person name="Seno S."/>
            <person name="Sessa L."/>
            <person name="Sheng Y."/>
            <person name="Shibata Y."/>
            <person name="Shimada H."/>
            <person name="Shimada K."/>
            <person name="Silva D."/>
            <person name="Sinclair B."/>
            <person name="Sperling S."/>
            <person name="Stupka E."/>
            <person name="Sugiura K."/>
            <person name="Sultana R."/>
            <person name="Takenaka Y."/>
            <person name="Taki K."/>
            <person name="Tammoja K."/>
            <person name="Tan S.L."/>
            <person name="Tang S."/>
            <person name="Taylor M.S."/>
            <person name="Tegner J."/>
            <person name="Teichmann S.A."/>
            <person name="Ueda H.R."/>
            <person name="van Nimwegen E."/>
            <person name="Verardo R."/>
            <person name="Wei C.L."/>
            <person name="Yagi K."/>
            <person name="Yamanishi H."/>
            <person name="Zabarovsky E."/>
            <person name="Zhu S."/>
            <person name="Zimmer A."/>
            <person name="Hide W."/>
            <person name="Bult C."/>
            <person name="Grimmond S.M."/>
            <person name="Teasdale R.D."/>
            <person name="Liu E.T."/>
            <person name="Brusic V."/>
            <person name="Quackenbush J."/>
            <person name="Wahlestedt C."/>
            <person name="Mattick J.S."/>
            <person name="Hume D.A."/>
            <person name="Kai C."/>
            <person name="Sasaki D."/>
            <person name="Tomaru Y."/>
            <person name="Fukuda S."/>
            <person name="Kanamori-Katayama M."/>
            <person name="Suzuki M."/>
            <person name="Aoki J."/>
            <person name="Arakawa T."/>
            <person name="Iida J."/>
            <person name="Imamura K."/>
            <person name="Itoh M."/>
            <person name="Kato T."/>
            <person name="Kawaji H."/>
            <person name="Kawagashira N."/>
            <person name="Kawashima T."/>
            <person name="Kojima M."/>
            <person name="Kondo S."/>
            <person name="Konno H."/>
            <person name="Nakano K."/>
            <person name="Ninomiya N."/>
            <person name="Nishio T."/>
            <person name="Okada M."/>
            <person name="Plessy C."/>
            <person name="Shibata K."/>
            <person name="Shiraki T."/>
            <person name="Suzuki S."/>
            <person name="Tagami M."/>
            <person name="Waki K."/>
            <person name="Watahiki A."/>
            <person name="Okamura-Oho Y."/>
            <person name="Suzuki H."/>
            <person name="Kawai J."/>
            <person name="Hayashizaki Y."/>
        </authorList>
    </citation>
    <scope>NUCLEOTIDE SEQUENCE [LARGE SCALE MRNA]</scope>
    <source>
        <strain>NOD</strain>
    </source>
</reference>
<reference key="5">
    <citation type="journal article" date="2009" name="PLoS Biol.">
        <title>Lineage-specific biology revealed by a finished genome assembly of the mouse.</title>
        <authorList>
            <person name="Church D.M."/>
            <person name="Goodstadt L."/>
            <person name="Hillier L.W."/>
            <person name="Zody M.C."/>
            <person name="Goldstein S."/>
            <person name="She X."/>
            <person name="Bult C.J."/>
            <person name="Agarwala R."/>
            <person name="Cherry J.L."/>
            <person name="DiCuccio M."/>
            <person name="Hlavina W."/>
            <person name="Kapustin Y."/>
            <person name="Meric P."/>
            <person name="Maglott D."/>
            <person name="Birtle Z."/>
            <person name="Marques A.C."/>
            <person name="Graves T."/>
            <person name="Zhou S."/>
            <person name="Teague B."/>
            <person name="Potamousis K."/>
            <person name="Churas C."/>
            <person name="Place M."/>
            <person name="Herschleb J."/>
            <person name="Runnheim R."/>
            <person name="Forrest D."/>
            <person name="Amos-Landgraf J."/>
            <person name="Schwartz D.C."/>
            <person name="Cheng Z."/>
            <person name="Lindblad-Toh K."/>
            <person name="Eichler E.E."/>
            <person name="Ponting C.P."/>
        </authorList>
    </citation>
    <scope>NUCLEOTIDE SEQUENCE [LARGE SCALE GENOMIC DNA]</scope>
    <source>
        <strain>129/SvJ</strain>
    </source>
</reference>
<reference key="6">
    <citation type="submission" date="2005-09" db="EMBL/GenBank/DDBJ databases">
        <authorList>
            <person name="Mural R.J."/>
            <person name="Adams M.D."/>
            <person name="Myers E.W."/>
            <person name="Smith H.O."/>
            <person name="Venter J.C."/>
        </authorList>
    </citation>
    <scope>NUCLEOTIDE SEQUENCE [LARGE SCALE GENOMIC DNA]</scope>
</reference>
<reference key="7">
    <citation type="journal article" date="2004" name="Genome Res.">
        <title>The status, quality, and expansion of the NIH full-length cDNA project: the Mammalian Gene Collection (MGC).</title>
        <authorList>
            <consortium name="The MGC Project Team"/>
        </authorList>
    </citation>
    <scope>NUCLEOTIDE SEQUENCE [LARGE SCALE MRNA]</scope>
    <source>
        <strain>C57BL/6J</strain>
        <tissue>Brain</tissue>
    </source>
</reference>
<reference key="8">
    <citation type="journal article" date="1997" name="Mol. Endocrinol.">
        <title>Physiological role of Akt in insulin-stimulated translocation of GLUT4 in transfected rat adipose cells.</title>
        <authorList>
            <person name="Cong L.N."/>
            <person name="Chen H."/>
            <person name="Li Y."/>
            <person name="Zhou L."/>
            <person name="McGibbon M.A."/>
            <person name="Taylor S.I."/>
            <person name="Quon M.J."/>
        </authorList>
    </citation>
    <scope>FUNCTION</scope>
    <scope>MUTAGENESIS OF LYS-179</scope>
</reference>
<reference key="9">
    <citation type="journal article" date="1998" name="J. Biol. Chem.">
        <title>Construction and characterization of a conditionally active version of the serine/threonine kinase Akt.</title>
        <authorList>
            <person name="Kohn A.D."/>
            <person name="Barthel A."/>
            <person name="Kovacina K.S."/>
            <person name="Boge A."/>
            <person name="Wallach B."/>
            <person name="Summers S.A."/>
            <person name="Birnbaum M.J."/>
            <person name="Scott P.H."/>
            <person name="Lawrence J.C. Jr."/>
            <person name="Roth R.A."/>
        </authorList>
    </citation>
    <scope>ACTIVITY REGULATION</scope>
    <scope>PHOSPHORYLATION</scope>
</reference>
<reference key="10">
    <citation type="journal article" date="1999" name="Mol. Cell. Biol.">
        <title>Insulin-induced phosphorylation and activation of cyclic nucleotide phosphodiesterase 3B by the serine-threonine kinase Akt.</title>
        <authorList>
            <person name="Kitamura T."/>
            <person name="Kitamura Y."/>
            <person name="Kuroda S."/>
            <person name="Hino Y."/>
            <person name="Ando M."/>
            <person name="Kotani K."/>
            <person name="Konishi H."/>
            <person name="Matsuzaki H."/>
            <person name="Kikkawa U."/>
            <person name="Ogawa W."/>
            <person name="Kasuga M."/>
        </authorList>
    </citation>
    <scope>FUNCTION IN PHOSPHORYLATION OF PDE3B</scope>
</reference>
<reference key="11">
    <citation type="journal article" date="2000" name="Blood">
        <title>Flt3 mutations from patients with acute myeloid leukemia induce transformation of 32D cells mediated by the Ras and STAT5 pathways.</title>
        <authorList>
            <person name="Mizuki M."/>
            <person name="Fenski R."/>
            <person name="Halfter H."/>
            <person name="Matsumura I."/>
            <person name="Schmidt R."/>
            <person name="Muller C."/>
            <person name="Gruning W."/>
            <person name="Kratz-Albers K."/>
            <person name="Serve S."/>
            <person name="Steur C."/>
            <person name="Buchner T."/>
            <person name="Kienast J."/>
            <person name="Kanakura Y."/>
            <person name="Berdel W.E."/>
            <person name="Serve H."/>
        </authorList>
    </citation>
    <scope>PHOSPHORYLATION IN RESPONSE TO FLT3 SIGNALING</scope>
</reference>
<reference key="12">
    <citation type="journal article" date="2000" name="Proc. Natl. Acad. Sci. U.S.A.">
        <title>Tcl1 enhances Akt kinase activity and mediates its nuclear translocation.</title>
        <authorList>
            <person name="Pekarsky Y."/>
            <person name="Koval A."/>
            <person name="Hallas C."/>
            <person name="Bichi R."/>
            <person name="Tresini M."/>
            <person name="Malstrom S."/>
            <person name="Russo G."/>
            <person name="Tsichlis P."/>
            <person name="Croce C.M."/>
        </authorList>
    </citation>
    <scope>SUBCELLULAR LOCATION</scope>
</reference>
<reference key="13">
    <citation type="journal article" date="2001" name="Circ. Res.">
        <title>Reperfusion-activated Akt kinase prevents apoptosis in transgenic mouse hearts overexpressing insulin-like growth factor-1.</title>
        <authorList>
            <person name="Yamashita K."/>
            <person name="Kajstura J."/>
            <person name="Discher D.J."/>
            <person name="Wasserlauf B.J."/>
            <person name="Bishopric N.H."/>
            <person name="Anversa P."/>
            <person name="Webster K.A."/>
        </authorList>
    </citation>
    <scope>FUNCTION</scope>
</reference>
<reference key="14">
    <citation type="journal article" date="2001" name="Mol. Endocrinol.">
        <title>Phosphorylation of PTP1B at Ser(50) by Akt impairs its ability to dephosphorylate the insulin receptor.</title>
        <authorList>
            <person name="Ravichandran L.V."/>
            <person name="Chen H."/>
            <person name="Li Y."/>
            <person name="Quon M.J."/>
        </authorList>
    </citation>
    <scope>FUNCTION IN PHOSPHORYLATION OF PTPN1</scope>
</reference>
<reference key="15">
    <citation type="journal article" date="2001" name="Science">
        <title>Carboxyl-terminal modulator protein (CTMP), a negative regulator of PKB/Akt and v-Akt at the plasma membrane.</title>
        <authorList>
            <person name="Maira S.-M."/>
            <person name="Galetic I."/>
            <person name="Brazil D.P."/>
            <person name="Kaech S."/>
            <person name="Ingley E."/>
            <person name="Thelen M."/>
            <person name="Hemmings B.A."/>
        </authorList>
    </citation>
    <scope>INTERACTION WITH THEM4</scope>
</reference>
<reference key="16">
    <citation type="journal article" date="2002" name="J. Biol. Chem.">
        <title>A method to identify serine kinase substrates. Akt phosphorylates a novel adipocyte protein with a Rab GTPase-activating protein (GAP) domain.</title>
        <authorList>
            <person name="Kane S."/>
            <person name="Sano H."/>
            <person name="Liu S.C.H."/>
            <person name="Asara J.M."/>
            <person name="Lane W.S."/>
            <person name="Garner C.C."/>
            <person name="Lienhard G.E."/>
        </authorList>
    </citation>
    <scope>FUNCTION IN PHOSPHORYLATION OF TBC1D4</scope>
</reference>
<reference key="17">
    <citation type="journal article" date="2002" name="J. Biol. Chem.">
        <title>The role of Asp-462 in regulating Akt activity.</title>
        <authorList>
            <person name="Xu J."/>
            <person name="Liu D."/>
            <person name="Songyang Z."/>
        </authorList>
    </citation>
    <scope>SUBCELLULAR LOCATION</scope>
    <scope>PROTEOLYTIC CLEAVAGE</scope>
    <scope>MUTAGENESIS OF ASP-434; ASP-456 AND ASP-462</scope>
</reference>
<reference key="18">
    <citation type="journal article" date="2005" name="J. Biol. Chem.">
        <title>A novel protein kinase B (PKB)/AKT-binding protein enhances PKB kinase activity and regulates DNA synthesis.</title>
        <authorList>
            <person name="Anai M."/>
            <person name="Shojima N."/>
            <person name="Katagiri H."/>
            <person name="Ogihara T."/>
            <person name="Sakoda H."/>
            <person name="Onishi Y."/>
            <person name="Ono H."/>
            <person name="Fujishiro M."/>
            <person name="Fukushima Y."/>
            <person name="Horike N."/>
            <person name="Viana A."/>
            <person name="Kikuchi M."/>
            <person name="Noguchi N."/>
            <person name="Takahashi S."/>
            <person name="Takata K."/>
            <person name="Oka Y."/>
            <person name="Uchijima Y."/>
            <person name="Kurihara H."/>
            <person name="Asano T."/>
        </authorList>
    </citation>
    <scope>INTERACTION WITH CCDC88A</scope>
    <scope>PHOSPHORYLATION AT THR-308 AND SER-473</scope>
</reference>
<reference key="19">
    <citation type="journal article" date="2005" name="J. Biol. Chem.">
        <title>Phosphorylation of grb10 regulates its interaction with 14-3-3.</title>
        <authorList>
            <person name="Urschel S."/>
            <person name="Bassermann F."/>
            <person name="Bai R.Y."/>
            <person name="Munch S."/>
            <person name="Peschel C."/>
            <person name="Duyster J."/>
        </authorList>
    </citation>
    <scope>INTERACTION WITH GRB10</scope>
</reference>
<reference key="20">
    <citation type="journal article" date="2006" name="Biochem. J.">
        <title>A WD-FYVE protein binds to the kinases Akt and PKCzeta/lambda.</title>
        <authorList>
            <person name="Fritzius T."/>
            <person name="Burkard G."/>
            <person name="Haas E."/>
            <person name="Heinrich J."/>
            <person name="Schweneker M."/>
            <person name="Bosse M."/>
            <person name="Zimmermann S."/>
            <person name="Frey A.D."/>
            <person name="Caelers A."/>
            <person name="Bachmann A.S."/>
            <person name="Moelling K."/>
        </authorList>
    </citation>
    <scope>INTERACTION WITH WDFY2</scope>
</reference>
<reference key="21">
    <citation type="journal article" date="2007" name="Proc. Natl. Acad. Sci. U.S.A.">
        <title>Large-scale phosphorylation analysis of mouse liver.</title>
        <authorList>
            <person name="Villen J."/>
            <person name="Beausoleil S.A."/>
            <person name="Gerber S.A."/>
            <person name="Gygi S.P."/>
        </authorList>
    </citation>
    <scope>PHOSPHORYLATION [LARGE SCALE ANALYSIS] AT SER-129</scope>
    <scope>IDENTIFICATION BY MASS SPECTROMETRY [LARGE SCALE ANALYSIS]</scope>
    <source>
        <tissue>Liver</tissue>
    </source>
</reference>
<reference key="22">
    <citation type="journal article" date="2008" name="Cell. Signal.">
        <title>A novel Akt/PKB-interacting protein promotes cell adhesion and inhibits familial amyotrophic lateral sclerosis-linked mutant SOD1-induced neuronal death via inhibition of PP2A-mediated dephosphorylation of Akt/PKB.</title>
        <authorList>
            <person name="Nawa M."/>
            <person name="Kanekura K."/>
            <person name="Hashimoto Y."/>
            <person name="Aiso S."/>
            <person name="Matsuoka M."/>
        </authorList>
    </citation>
    <scope>INTERACTION WITH BTBD10</scope>
</reference>
<reference key="23">
    <citation type="journal article" date="2008" name="EMBO J.">
        <title>Akt- and Foxo1-interacting WD-repeat-FYVE protein promotes adipogenesis.</title>
        <authorList>
            <person name="Fritzius T."/>
            <person name="Moelling K."/>
        </authorList>
    </citation>
    <scope>COMPLEX FORMATION WITH WDFY2 AND FOXO1</scope>
    <scope>SUBUNIT</scope>
    <scope>SUBCELLULAR LOCATION</scope>
</reference>
<reference key="24">
    <citation type="journal article" date="2008" name="EMBO J.">
        <title>Essential function of TORC2 in PKC and Akt turn motif phosphorylation, maturation and signalling.</title>
        <authorList>
            <person name="Ikenoue T."/>
            <person name="Inoki K."/>
            <person name="Yang Q."/>
            <person name="Zhou X."/>
            <person name="Guan K.L."/>
        </authorList>
    </citation>
    <scope>PHOSPHORYLATION</scope>
</reference>
<reference key="25">
    <citation type="journal article" date="2008" name="EMBO J.">
        <title>The mammalian target of rapamycin complex 2 controls folding and stability of Akt and protein kinase C.</title>
        <authorList>
            <person name="Facchinetti V."/>
            <person name="Ouyang W."/>
            <person name="Wei H."/>
            <person name="Soto N."/>
            <person name="Lazorchak A."/>
            <person name="Gould C."/>
            <person name="Lowry C."/>
            <person name="Newton A.C."/>
            <person name="Mao Y."/>
            <person name="Miao R.Q."/>
            <person name="Sessa W.C."/>
            <person name="Qin J."/>
            <person name="Zhang P."/>
            <person name="Su B."/>
            <person name="Jacinto E."/>
        </authorList>
    </citation>
    <scope>PHOSPHORYLATION AT THR-450</scope>
</reference>
<reference key="26">
    <citation type="journal article" date="2008" name="Exp. Cell Res.">
        <title>O-GlcNAc modulation at Akt1 Ser473 correlates with apoptosis of murine pancreatic beta cells.</title>
        <authorList>
            <person name="Kang E.S."/>
            <person name="Han D."/>
            <person name="Park J."/>
            <person name="Kwak T.K."/>
            <person name="Oh M.A."/>
            <person name="Lee S.A."/>
            <person name="Choi S."/>
            <person name="Park Z.Y."/>
            <person name="Kim Y."/>
            <person name="Lee J.W."/>
        </authorList>
    </citation>
    <scope>GLYCOSYLATION AT SER-473</scope>
</reference>
<reference key="27">
    <citation type="journal article" date="2008" name="Nature">
        <title>Phosphoinositide signalling links O-GlcNAc transferase to insulin resistance.</title>
        <authorList>
            <person name="Yang X."/>
            <person name="Ongusaha P.P."/>
            <person name="Miles P.D."/>
            <person name="Havstad J.C."/>
            <person name="Zhang F."/>
            <person name="So W.V."/>
            <person name="Kudlow J.E."/>
            <person name="Michell R.H."/>
            <person name="Olefsky J.M."/>
            <person name="Field S.J."/>
            <person name="Evans R.M."/>
        </authorList>
    </citation>
    <scope>FUNCTION</scope>
    <scope>GLYCOSYLATION AT SER-473</scope>
    <scope>PHOSPHORYLATION AT THR-308</scope>
</reference>
<reference key="28">
    <citation type="journal article" date="2009" name="J. Biol. Chem.">
        <title>Identification and characterization of a novel gene, dapr, involved in skeletal muscle differentiation and protein kinase B signaling.</title>
        <authorList>
            <person name="Virtanen C."/>
            <person name="Paris J."/>
            <person name="Takahashi M."/>
        </authorList>
    </citation>
    <scope>SUBCELLULAR LOCATION</scope>
    <scope>INTERACTION WITH PKHM3</scope>
</reference>
<reference key="29">
    <citation type="journal article" date="2009" name="Neuron">
        <title>DISC1 regulates new neuron development in the adult brain via modulation of AKT-mTOR signaling through KIAA1212.</title>
        <authorList>
            <person name="Kim J.Y."/>
            <person name="Duan X."/>
            <person name="Liu C.Y."/>
            <person name="Jang M.H."/>
            <person name="Guo J.U."/>
            <person name="Pow-anpongkul N."/>
            <person name="Kang E."/>
            <person name="Song H."/>
            <person name="Ming G.L."/>
        </authorList>
    </citation>
    <scope>FUNCTION</scope>
</reference>
<reference key="30">
    <citation type="journal article" date="2010" name="Cell">
        <title>A tissue-specific atlas of mouse protein phosphorylation and expression.</title>
        <authorList>
            <person name="Huttlin E.L."/>
            <person name="Jedrychowski M.P."/>
            <person name="Elias J.E."/>
            <person name="Goswami T."/>
            <person name="Rad R."/>
            <person name="Beausoleil S.A."/>
            <person name="Villen J."/>
            <person name="Haas W."/>
            <person name="Sowa M.E."/>
            <person name="Gygi S.P."/>
        </authorList>
    </citation>
    <scope>PHOSPHORYLATION [LARGE SCALE ANALYSIS] AT SER-129</scope>
    <scope>IDENTIFICATION BY MASS SPECTROMETRY [LARGE SCALE ANALYSIS]</scope>
    <source>
        <tissue>Brain</tissue>
        <tissue>Brown adipose tissue</tissue>
        <tissue>Heart</tissue>
        <tissue>Kidney</tissue>
        <tissue>Liver</tissue>
        <tissue>Lung</tissue>
        <tissue>Pancreas</tissue>
        <tissue>Spleen</tissue>
        <tissue>Testis</tissue>
    </source>
</reference>
<reference key="31">
    <citation type="journal article" date="2010" name="Cell Metab.">
        <title>Cdc2-like kinase 2 is an insulin-regulated suppressor of hepatic gluconeogenesis.</title>
        <authorList>
            <person name="Rodgers J.T."/>
            <person name="Haas W."/>
            <person name="Gygi S.P."/>
            <person name="Puigserver P."/>
        </authorList>
    </citation>
    <scope>INTERACTION WITH CLK2</scope>
</reference>
<reference key="32">
    <citation type="journal article" date="2010" name="EMBO J.">
        <title>mTORC2 can associate with ribosomes to promote cotranslational phosphorylation and stability of nascent Akt polypeptide.</title>
        <authorList>
            <person name="Oh W.J."/>
            <person name="Wu C.C."/>
            <person name="Kim S.J."/>
            <person name="Facchinetti V."/>
            <person name="Julien L.A."/>
            <person name="Finlan M."/>
            <person name="Roux P.P."/>
            <person name="Su B."/>
            <person name="Jacinto E."/>
        </authorList>
    </citation>
    <scope>PHOSPHORYLATION AT THR-450</scope>
</reference>
<reference key="33">
    <citation type="journal article" date="2010" name="J. Biol. Chem.">
        <title>Isoform-specific regulation of Akt signaling by the endosomal protein WDFY2.</title>
        <authorList>
            <person name="Walz H.A."/>
            <person name="Shi X."/>
            <person name="Chouinard M."/>
            <person name="Bue C.A."/>
            <person name="Navaroli D.M."/>
            <person name="Hayakawa A."/>
            <person name="Zhou Q.L."/>
            <person name="Nadler J."/>
            <person name="Leonard D.M."/>
            <person name="Corvera S."/>
        </authorList>
    </citation>
    <scope>INTERACTION WITH WDFY2</scope>
    <scope>SUBCELLULAR LOCATION</scope>
</reference>
<reference key="34">
    <citation type="journal article" date="2010" name="PLoS ONE">
        <title>Ack1 mediated AKT/PKB tyrosine 176 phosphorylation regulates its activation.</title>
        <authorList>
            <person name="Mahajan K."/>
            <person name="Coppola D."/>
            <person name="Challa S."/>
            <person name="Fang B."/>
            <person name="Chen Y.A."/>
            <person name="Zhu W."/>
            <person name="Lopez A.S."/>
            <person name="Koomen J."/>
            <person name="Engelman R.W."/>
            <person name="Rivera C."/>
            <person name="Muraoka-Cook R.S."/>
            <person name="Cheng J.Q."/>
            <person name="Schoenbrunn E."/>
            <person name="Sebti S.M."/>
            <person name="Earp H.S."/>
            <person name="Mahajan N.P."/>
        </authorList>
    </citation>
    <scope>SUBCELLULAR LOCATION</scope>
    <scope>PHOSPHORYLATION AT TYR-176; THR-308 AND SER-473</scope>
    <scope>MUTAGENESIS OF TYR-176</scope>
    <scope>INTERACTION WITH TNK2</scope>
</reference>
<reference key="35">
    <citation type="journal article" date="2011" name="J. Biol. Chem.">
        <title>Protein-tyrosine phosphatase DEP-1 controls receptor tyrosine kinase FLT3 signaling.</title>
        <authorList>
            <person name="Arora D."/>
            <person name="Stopp S."/>
            <person name="Bohmer S.A."/>
            <person name="Schons J."/>
            <person name="Godfrey R."/>
            <person name="Masson K."/>
            <person name="Razumovskaya E."/>
            <person name="Ronnstrand L."/>
            <person name="Tanzer S."/>
            <person name="Bauer R."/>
            <person name="Bohmer F.D."/>
            <person name="Muller J.P."/>
        </authorList>
    </citation>
    <scope>PHOSPHORYLATION IN RESPONSE TO FLT3 SIGNALING</scope>
</reference>
<reference key="36">
    <citation type="journal article" date="2011" name="J. Biol. Chem.">
        <title>mTOR complex 2 targets Akt for proteasomal degradation via phosphorylation at the hydrophobic motif.</title>
        <authorList>
            <person name="Wu Y.T."/>
            <person name="Ouyang W."/>
            <person name="Lazorchak A.S."/>
            <person name="Liu D."/>
            <person name="Shen H.M."/>
            <person name="Su B."/>
        </authorList>
    </citation>
    <scope>PHOSPHORYLATION AT SER-473</scope>
    <scope>UBIQUITINATION</scope>
</reference>
<reference key="37">
    <citation type="journal article" date="2011" name="Nat. Cell Biol.">
        <title>ZNRF1 promotes Wallerian degeneration by degrading AKT to induce GSK3B-dependent CRMP2 phosphorylation.</title>
        <authorList>
            <person name="Wakatsuki S."/>
            <person name="Saitoh F."/>
            <person name="Araki T."/>
        </authorList>
    </citation>
    <scope>FUNCTION</scope>
    <scope>CATALYTIC ACTIVITY</scope>
    <scope>UBIQUITINATION BY ZNRF1</scope>
    <scope>MUTAGENESIS OF THR-308 AND SER-473</scope>
</reference>
<reference key="38">
    <citation type="journal article" date="2011" name="Sci. Signal.">
        <title>Akt determines cell fate through inhibition of the PERK-eIF2alpha phosphorylation pathway.</title>
        <authorList>
            <person name="Mounir Z."/>
            <person name="Krishnamoorthy J.L."/>
            <person name="Wang S."/>
            <person name="Papadopoulou B."/>
            <person name="Campbell S."/>
            <person name="Muller W.J."/>
            <person name="Hatzoglou M."/>
            <person name="Koromilas A.E."/>
        </authorList>
    </citation>
    <scope>FUNCTION</scope>
</reference>
<reference key="39">
    <citation type="journal article" date="2002" name="Cell. Signal.">
        <title>The protein kinase B/Akt signalling pathway in human malignancy.</title>
        <authorList>
            <person name="Nicholson K.M."/>
            <person name="Anderson N.G."/>
        </authorList>
    </citation>
    <scope>REVIEW ON FUNCTION</scope>
</reference>
<reference key="40">
    <citation type="journal article" date="2011" name="Cell. Signal.">
        <title>Akt signalling in health and disease.</title>
        <authorList>
            <person name="Hers I."/>
            <person name="Vincent E.E."/>
            <person name="Tavare J.M."/>
        </authorList>
    </citation>
    <scope>REVIEW ON FUNCTION</scope>
</reference>
<reference key="41">
    <citation type="journal article" date="2011" name="Histol. Histopathol.">
        <title>Akt1 and Akt2: differentiating the aktion.</title>
        <authorList>
            <person name="Heron-Milhavet L."/>
            <person name="Khouya N."/>
            <person name="Fernandez A."/>
            <person name="Lamb N.J."/>
        </authorList>
    </citation>
    <scope>REVIEW ON FUNCTION</scope>
</reference>
<reference key="42">
    <citation type="journal article" date="2013" name="BMC Biochem.">
        <title>KCTD20, a relative of BTBD10, is a positive regulator of Akt.</title>
        <authorList>
            <person name="Nawa M."/>
            <person name="Matsuoka M."/>
        </authorList>
    </citation>
    <scope>INTERACTION WITH KCTD20</scope>
</reference>
<reference key="43">
    <citation type="journal article" date="2013" name="Cell Metab.">
        <title>Dynamic adipocyte phosphoproteome reveals that Akt directly regulates mTORC2.</title>
        <authorList>
            <person name="Humphrey S.J."/>
            <person name="Yang G."/>
            <person name="Yang P."/>
            <person name="Fazakerley D.J."/>
            <person name="Stoeckli J."/>
            <person name="Yang J.Y."/>
            <person name="James D.E."/>
        </authorList>
    </citation>
    <scope>FUNCTION</scope>
    <scope>CATALYTIC ACTIVITY</scope>
</reference>
<reference key="44">
    <citation type="journal article" date="2013" name="Sci. Signal.">
        <title>BSTA promotes mTORC2-mediated phosphorylation of Akt1 to suppress expression of FoxC2 and stimulate adipocyte differentiation.</title>
        <authorList>
            <person name="Yao Y."/>
            <person name="Suraokar M."/>
            <person name="Darnay B.G."/>
            <person name="Hollier B.G."/>
            <person name="Shaiken T.E."/>
            <person name="Asano T."/>
            <person name="Chen C.H."/>
            <person name="Chang B.H."/>
            <person name="Lu Y."/>
            <person name="Mills G.B."/>
            <person name="Sarbassov D."/>
            <person name="Mani S.A."/>
            <person name="Abbruzzese J.L."/>
            <person name="Reddy S.A."/>
        </authorList>
    </citation>
    <scope>INTERACTION WITH SYAP1</scope>
</reference>
<reference key="45">
    <citation type="journal article" date="2014" name="Nature">
        <title>Cell-cycle-regulated activation of Akt kinase by phosphorylation at its carboxyl terminus.</title>
        <authorList>
            <person name="Liu P."/>
            <person name="Begley M."/>
            <person name="Michowski W."/>
            <person name="Inuzuka H."/>
            <person name="Ginzberg M."/>
            <person name="Gao D."/>
            <person name="Tsou P."/>
            <person name="Gan W."/>
            <person name="Papa A."/>
            <person name="Kim B.M."/>
            <person name="Wan L."/>
            <person name="Singh A."/>
            <person name="Zhai B."/>
            <person name="Yuan M."/>
            <person name="Wang Z."/>
            <person name="Gygi S.P."/>
            <person name="Lee T.H."/>
            <person name="Lu K.P."/>
            <person name="Toker A."/>
            <person name="Pandolfi P.P."/>
            <person name="Asara J.M."/>
            <person name="Kirschner M.W."/>
            <person name="Sicinski P."/>
            <person name="Cantley L."/>
            <person name="Wei W."/>
        </authorList>
    </citation>
    <scope>PHOSPHORYLATION AT SER-477 AND THR-479</scope>
    <scope>MUTAGENESIS OF 477-SER--THR-479</scope>
</reference>
<reference key="46">
    <citation type="journal article" date="2015" name="Cell">
        <title>Critical role for the DNA sensor AIM2 in stem cell proliferation and cancer.</title>
        <authorList>
            <person name="Man S.M."/>
            <person name="Zhu Q."/>
            <person name="Zhu L."/>
            <person name="Liu Z."/>
            <person name="Karki R."/>
            <person name="Malik A."/>
            <person name="Sharma D."/>
            <person name="Li L."/>
            <person name="Malireddi R.K."/>
            <person name="Gurung P."/>
            <person name="Neale G."/>
            <person name="Olsen S.R."/>
            <person name="Carter R.A."/>
            <person name="McGoldrick D.J."/>
            <person name="Wu G."/>
            <person name="Finkelstein D."/>
            <person name="Vogel P."/>
            <person name="Gilbertson R.J."/>
            <person name="Kanneganti T.D."/>
        </authorList>
    </citation>
    <scope>FUNCTION</scope>
    <scope>PHOSPHORYLATION AT SER-473</scope>
</reference>
<reference key="47">
    <citation type="journal article" date="2015" name="Cell Rep.">
        <title>Akt kinase-mediated checkpoint of cGAS DNA sensing pathway.</title>
        <authorList>
            <person name="Seo G.J."/>
            <person name="Yang A."/>
            <person name="Tan B."/>
            <person name="Kim S."/>
            <person name="Liang Q."/>
            <person name="Choi Y."/>
            <person name="Yuan W."/>
            <person name="Feng P."/>
            <person name="Park H.S."/>
            <person name="Jung J.U."/>
        </authorList>
    </citation>
    <scope>FUNCTION</scope>
    <scope>CATALYTIC ACTIVITY</scope>
    <scope>MUTAGENESIS OF LYS-179</scope>
</reference>
<reference key="48">
    <citation type="journal article" date="2015" name="J. Biol. Chem.">
        <title>Deletion of MLIP (muscle-enriched A-type lamin-interacting protein) leads to cardiac hyperactivation of Akt/mammalian target of rapamycin (mTOR) and impaired cardiac adaptation.</title>
        <authorList>
            <person name="Cattin M.E."/>
            <person name="Wang J."/>
            <person name="Weldrick J.J."/>
            <person name="Roeske C.L."/>
            <person name="Mak E."/>
            <person name="Thorn S.L."/>
            <person name="DaSilva J.N."/>
            <person name="Wang Y."/>
            <person name="Lusis A.J."/>
            <person name="Burgon P.G."/>
        </authorList>
    </citation>
    <scope>PHOSPHORYLATION AT THR-308 AND SER-473</scope>
</reference>
<reference key="49">
    <citation type="journal article" date="2015" name="Cell Rep.">
        <title>A Positive Feedback Loop between Akt and mTORC2 via SIN1 Phosphorylation.</title>
        <authorList>
            <person name="Yang G."/>
            <person name="Murashige D.S."/>
            <person name="Humphrey S.J."/>
            <person name="James D.E."/>
        </authorList>
    </citation>
    <scope>FUNCTION</scope>
    <scope>CATALYTIC ACTIVITY</scope>
    <scope>PHOSPHORYLATION AT THR-308</scope>
</reference>
<reference key="50">
    <citation type="journal article" date="2015" name="Nat. Med.">
        <title>Inflammasome-independent role of AIM2 in suppressing colon tumorigenesis via DNA-PK and Akt.</title>
        <authorList>
            <person name="Wilson J.E."/>
            <person name="Petrucelli A.S."/>
            <person name="Chen L."/>
            <person name="Koblansky A.A."/>
            <person name="Truax A.D."/>
            <person name="Oyama Y."/>
            <person name="Rogers A.B."/>
            <person name="Brickey W.J."/>
            <person name="Wang Y."/>
            <person name="Schneider M."/>
            <person name="Muehlbauer M."/>
            <person name="Chou W.C."/>
            <person name="Barker B.R."/>
            <person name="Jobin C."/>
            <person name="Allbritton N.L."/>
            <person name="Ramsden D.A."/>
            <person name="Davis B.K."/>
            <person name="Ting J.P."/>
        </authorList>
    </citation>
    <scope>FUNCTION</scope>
    <scope>PHOSPHORYLATION AT SER-473</scope>
</reference>
<reference key="51">
    <citation type="journal article" date="2020" name="Elife">
        <title>Gating and selectivity mechanisms for the lysosomal K+ channel TMEM175.</title>
        <authorList>
            <person name="Oh S."/>
            <person name="Paknejad N."/>
            <person name="Hite R.K."/>
        </authorList>
    </citation>
    <scope>FUNCTION</scope>
</reference>
<reference key="52">
    <citation type="journal article" date="2019" name="EMBO J.">
        <title>Akt-mediated phosphorylation of MICU1 regulates mitochondrial Ca2+ levels and tumor growth.</title>
        <authorList>
            <person name="Marchi S."/>
            <person name="Corricelli M."/>
            <person name="Branchini A."/>
            <person name="Vitto V.A.M."/>
            <person name="Missiroli S."/>
            <person name="Morciano G."/>
            <person name="Perrone M."/>
            <person name="Ferrarese M."/>
            <person name="Giorgi C."/>
            <person name="Pinotti M."/>
            <person name="Galluzzi L."/>
            <person name="Kroemer G."/>
            <person name="Pinton P."/>
        </authorList>
    </citation>
    <scope>FUNCTION</scope>
    <scope>CATALYTIC ACTIVITY</scope>
    <scope>SUBCELLULAR LOCATION</scope>
    <scope>PHOSPHORYLATION AT SER-473</scope>
</reference>
<reference key="53">
    <citation type="journal article" date="2020" name="Nature">
        <title>AIM2 inflammasome surveillance of DNA damage shapes neurodevelopment.</title>
        <authorList>
            <person name="Lammert C.R."/>
            <person name="Frost E.L."/>
            <person name="Bellinger C.E."/>
            <person name="Bolte A.C."/>
            <person name="McKee C.A."/>
            <person name="Hurt M.E."/>
            <person name="Paysour M.J."/>
            <person name="Ennerfelt H.E."/>
            <person name="Lukens J.R."/>
        </authorList>
    </citation>
    <scope>FUNCTION</scope>
    <scope>PHOSPHORYLATION AT SER-473</scope>
</reference>
<protein>
    <recommendedName>
        <fullName>RAC-alpha serine/threonine-protein kinase</fullName>
        <ecNumber evidence="35 37 42 44 45">2.7.11.1</ecNumber>
    </recommendedName>
    <alternativeName>
        <fullName>AKT1 kinase</fullName>
    </alternativeName>
    <alternativeName>
        <fullName>Protein kinase B</fullName>
        <shortName>PKB</shortName>
    </alternativeName>
    <alternativeName>
        <fullName>Protein kinase B alpha</fullName>
        <shortName>PKB alpha</shortName>
    </alternativeName>
    <alternativeName>
        <fullName>Proto-oncogene c-Akt</fullName>
    </alternativeName>
    <alternativeName>
        <fullName>RAC-PK-alpha</fullName>
    </alternativeName>
    <alternativeName>
        <fullName>Thymoma viral proto-oncogene</fullName>
    </alternativeName>
</protein>
<proteinExistence type="evidence at protein level"/>
<gene>
    <name type="primary">Akt1</name>
    <name type="synonym">Akt</name>
    <name type="synonym">Rac</name>
</gene>
<sequence length="480" mass="55707">MNDVAIVKEGWLHKRGEYIKTWRPRYFLLKNDGTFIGYKERPQDVDQRESPLNNFSVAQCQLMKTERPRPNTFIIRCLQWTTVIERTFHVETPEEREEWATAIQTVADGLKRQEEETMDFRSGSPSDNSGAEEMEVSLAKPKHRVTMNEFEYLKLLGKGTFGKVILVKEKATGRYYAMKILKKEVIVAKDEVAHTLTENRVLQNSRHPFLTALKYSFQTHDRLCFVMEYANGGELFFHLSRERVFSEDRARFYGAEIVSALDYLHSEKNVVYRDLKLENLMLDKDGHIKITDFGLCKEGIKDGATMKTFCGTPEYLAPEVLEDNDYGRAVDWWGLGVVMYEMMCGRLPFYNQDHEKLFELILMEEIRFPRTLGPEAKSLLSGLLKKDPTQRLGGGSEDAKEIMQHRFFANIVWQDVYEKKLSPPFKPQVTSETDTRYFDEEFTAQMITITPPDQDDSMECVDSERRPHFPQFSYSASGTA</sequence>
<evidence type="ECO:0000250" key="1">
    <source>
        <dbReference type="UniProtKB" id="P31749"/>
    </source>
</evidence>
<evidence type="ECO:0000250" key="2">
    <source>
        <dbReference type="UniProtKB" id="P31751"/>
    </source>
</evidence>
<evidence type="ECO:0000250" key="3">
    <source>
        <dbReference type="UniProtKB" id="P47196"/>
    </source>
</evidence>
<evidence type="ECO:0000255" key="4">
    <source>
        <dbReference type="PROSITE-ProRule" id="PRU00145"/>
    </source>
</evidence>
<evidence type="ECO:0000255" key="5">
    <source>
        <dbReference type="PROSITE-ProRule" id="PRU00159"/>
    </source>
</evidence>
<evidence type="ECO:0000255" key="6">
    <source>
        <dbReference type="PROSITE-ProRule" id="PRU00618"/>
    </source>
</evidence>
<evidence type="ECO:0000255" key="7">
    <source>
        <dbReference type="PROSITE-ProRule" id="PRU10027"/>
    </source>
</evidence>
<evidence type="ECO:0000256" key="8">
    <source>
        <dbReference type="SAM" id="MobiDB-lite"/>
    </source>
</evidence>
<evidence type="ECO:0000269" key="9">
    <source>
    </source>
</evidence>
<evidence type="ECO:0000269" key="10">
    <source>
    </source>
</evidence>
<evidence type="ECO:0000269" key="11">
    <source>
    </source>
</evidence>
<evidence type="ECO:0000269" key="12">
    <source>
    </source>
</evidence>
<evidence type="ECO:0000269" key="13">
    <source>
    </source>
</evidence>
<evidence type="ECO:0000269" key="14">
    <source>
    </source>
</evidence>
<evidence type="ECO:0000269" key="15">
    <source>
    </source>
</evidence>
<evidence type="ECO:0000269" key="16">
    <source>
    </source>
</evidence>
<evidence type="ECO:0000269" key="17">
    <source>
    </source>
</evidence>
<evidence type="ECO:0000269" key="18">
    <source>
    </source>
</evidence>
<evidence type="ECO:0000269" key="19">
    <source>
    </source>
</evidence>
<evidence type="ECO:0000269" key="20">
    <source>
    </source>
</evidence>
<evidence type="ECO:0000269" key="21">
    <source>
    </source>
</evidence>
<evidence type="ECO:0000269" key="22">
    <source>
    </source>
</evidence>
<evidence type="ECO:0000269" key="23">
    <source>
    </source>
</evidence>
<evidence type="ECO:0000269" key="24">
    <source>
    </source>
</evidence>
<evidence type="ECO:0000269" key="25">
    <source>
    </source>
</evidence>
<evidence type="ECO:0000269" key="26">
    <source>
    </source>
</evidence>
<evidence type="ECO:0000269" key="27">
    <source>
    </source>
</evidence>
<evidence type="ECO:0000269" key="28">
    <source>
    </source>
</evidence>
<evidence type="ECO:0000269" key="29">
    <source>
    </source>
</evidence>
<evidence type="ECO:0000269" key="30">
    <source>
    </source>
</evidence>
<evidence type="ECO:0000269" key="31">
    <source>
    </source>
</evidence>
<evidence type="ECO:0000269" key="32">
    <source>
    </source>
</evidence>
<evidence type="ECO:0000269" key="33">
    <source>
    </source>
</evidence>
<evidence type="ECO:0000269" key="34">
    <source>
    </source>
</evidence>
<evidence type="ECO:0000269" key="35">
    <source>
    </source>
</evidence>
<evidence type="ECO:0000269" key="36">
    <source>
    </source>
</evidence>
<evidence type="ECO:0000269" key="37">
    <source>
    </source>
</evidence>
<evidence type="ECO:0000269" key="38">
    <source>
    </source>
</evidence>
<evidence type="ECO:0000269" key="39">
    <source>
    </source>
</evidence>
<evidence type="ECO:0000269" key="40">
    <source>
    </source>
</evidence>
<evidence type="ECO:0000269" key="41">
    <source>
    </source>
</evidence>
<evidence type="ECO:0000269" key="42">
    <source>
    </source>
</evidence>
<evidence type="ECO:0000269" key="43">
    <source>
    </source>
</evidence>
<evidence type="ECO:0000269" key="44">
    <source>
    </source>
</evidence>
<evidence type="ECO:0000269" key="45">
    <source>
    </source>
</evidence>
<evidence type="ECO:0000269" key="46">
    <source>
    </source>
</evidence>
<evidence type="ECO:0000269" key="47">
    <source>
    </source>
</evidence>
<evidence type="ECO:0000269" key="48">
    <source>
    </source>
</evidence>
<evidence type="ECO:0000269" key="49">
    <source>
    </source>
</evidence>
<evidence type="ECO:0000269" key="50">
    <source>
    </source>
</evidence>
<evidence type="ECO:0000303" key="51">
    <source>
    </source>
</evidence>
<evidence type="ECO:0000303" key="52">
    <source>
    </source>
</evidence>
<evidence type="ECO:0000303" key="53">
    <source>
    </source>
</evidence>
<evidence type="ECO:0000305" key="54"/>
<evidence type="ECO:0000305" key="55">
    <source>
    </source>
</evidence>
<evidence type="ECO:0000305" key="56">
    <source>
    </source>
</evidence>
<evidence type="ECO:0000305" key="57">
    <source>
    </source>
</evidence>
<evidence type="ECO:0007744" key="58">
    <source>
    </source>
</evidence>
<evidence type="ECO:0007744" key="59">
    <source>
    </source>
</evidence>
<keyword id="KW-0007">Acetylation</keyword>
<keyword id="KW-0053">Apoptosis</keyword>
<keyword id="KW-0067">ATP-binding</keyword>
<keyword id="KW-0119">Carbohydrate metabolism</keyword>
<keyword id="KW-1003">Cell membrane</keyword>
<keyword id="KW-0963">Cytoplasm</keyword>
<keyword id="KW-0217">Developmental protein</keyword>
<keyword id="KW-1015">Disulfide bond</keyword>
<keyword id="KW-0313">Glucose metabolism</keyword>
<keyword id="KW-0320">Glycogen biosynthesis</keyword>
<keyword id="KW-0321">Glycogen metabolism</keyword>
<keyword id="KW-0325">Glycoprotein</keyword>
<keyword id="KW-1017">Isopeptide bond</keyword>
<keyword id="KW-0418">Kinase</keyword>
<keyword id="KW-0472">Membrane</keyword>
<keyword id="KW-0496">Mitochondrion</keyword>
<keyword id="KW-0524">Neurogenesis</keyword>
<keyword id="KW-0547">Nucleotide-binding</keyword>
<keyword id="KW-0539">Nucleus</keyword>
<keyword id="KW-0597">Phosphoprotein</keyword>
<keyword id="KW-1185">Reference proteome</keyword>
<keyword id="KW-0723">Serine/threonine-protein kinase</keyword>
<keyword id="KW-0762">Sugar transport</keyword>
<keyword id="KW-0808">Transferase</keyword>
<keyword id="KW-0810">Translation regulation</keyword>
<keyword id="KW-0813">Transport</keyword>
<keyword id="KW-0832">Ubl conjugation</keyword>